<evidence type="ECO:0000250" key="1"/>
<evidence type="ECO:0000250" key="2">
    <source>
        <dbReference type="UniProtKB" id="O08852"/>
    </source>
</evidence>
<evidence type="ECO:0000255" key="3"/>
<evidence type="ECO:0000255" key="4">
    <source>
        <dbReference type="PROSITE-ProRule" id="PRU00040"/>
    </source>
</evidence>
<evidence type="ECO:0000255" key="5">
    <source>
        <dbReference type="PROSITE-ProRule" id="PRU00098"/>
    </source>
</evidence>
<evidence type="ECO:0000255" key="6">
    <source>
        <dbReference type="PROSITE-ProRule" id="PRU00151"/>
    </source>
</evidence>
<evidence type="ECO:0000255" key="7">
    <source>
        <dbReference type="PROSITE-ProRule" id="PRU00152"/>
    </source>
</evidence>
<evidence type="ECO:0000255" key="8">
    <source>
        <dbReference type="PROSITE-ProRule" id="PRU00511"/>
    </source>
</evidence>
<evidence type="ECO:0000255" key="9">
    <source>
        <dbReference type="PROSITE-ProRule" id="PRU00558"/>
    </source>
</evidence>
<evidence type="ECO:0000256" key="10">
    <source>
        <dbReference type="SAM" id="MobiDB-lite"/>
    </source>
</evidence>
<evidence type="ECO:0000269" key="11">
    <source>
    </source>
</evidence>
<evidence type="ECO:0000269" key="12">
    <source>
    </source>
</evidence>
<evidence type="ECO:0000269" key="13">
    <source>
    </source>
</evidence>
<evidence type="ECO:0000269" key="14">
    <source>
    </source>
</evidence>
<evidence type="ECO:0000269" key="15">
    <source>
    </source>
</evidence>
<evidence type="ECO:0000269" key="16">
    <source>
    </source>
</evidence>
<evidence type="ECO:0000269" key="17">
    <source>
    </source>
</evidence>
<evidence type="ECO:0000269" key="18">
    <source>
    </source>
</evidence>
<evidence type="ECO:0000269" key="19">
    <source>
    </source>
</evidence>
<evidence type="ECO:0000269" key="20">
    <source>
    </source>
</evidence>
<evidence type="ECO:0000269" key="21">
    <source>
    </source>
</evidence>
<evidence type="ECO:0000269" key="22">
    <source>
    </source>
</evidence>
<evidence type="ECO:0000269" key="23">
    <source>
    </source>
</evidence>
<evidence type="ECO:0000269" key="24">
    <source>
    </source>
</evidence>
<evidence type="ECO:0000269" key="25">
    <source>
    </source>
</evidence>
<evidence type="ECO:0000269" key="26">
    <source>
    </source>
</evidence>
<evidence type="ECO:0000269" key="27">
    <source>
    </source>
</evidence>
<evidence type="ECO:0000269" key="28">
    <source>
    </source>
</evidence>
<evidence type="ECO:0000269" key="29">
    <source>
    </source>
</evidence>
<evidence type="ECO:0000269" key="30">
    <source>
    </source>
</evidence>
<evidence type="ECO:0000269" key="31">
    <source>
    </source>
</evidence>
<evidence type="ECO:0000269" key="32">
    <source>
    </source>
</evidence>
<evidence type="ECO:0000269" key="33">
    <source>
    </source>
</evidence>
<evidence type="ECO:0000269" key="34">
    <source>
    </source>
</evidence>
<evidence type="ECO:0000269" key="35">
    <source>
    </source>
</evidence>
<evidence type="ECO:0000269" key="36">
    <source>
    </source>
</evidence>
<evidence type="ECO:0000269" key="37">
    <source>
    </source>
</evidence>
<evidence type="ECO:0000269" key="38">
    <source>
    </source>
</evidence>
<evidence type="ECO:0000269" key="39">
    <source>
    </source>
</evidence>
<evidence type="ECO:0000269" key="40">
    <source>
    </source>
</evidence>
<evidence type="ECO:0000269" key="41">
    <source>
    </source>
</evidence>
<evidence type="ECO:0000269" key="42">
    <source>
    </source>
</evidence>
<evidence type="ECO:0000269" key="43">
    <source>
    </source>
</evidence>
<evidence type="ECO:0000269" key="44">
    <source>
    </source>
</evidence>
<evidence type="ECO:0000269" key="45">
    <source>
    </source>
</evidence>
<evidence type="ECO:0000269" key="46">
    <source>
    </source>
</evidence>
<evidence type="ECO:0000269" key="47">
    <source>
    </source>
</evidence>
<evidence type="ECO:0000269" key="48">
    <source>
    </source>
</evidence>
<evidence type="ECO:0000269" key="49">
    <source>
    </source>
</evidence>
<evidence type="ECO:0000269" key="50">
    <source>
    </source>
</evidence>
<evidence type="ECO:0000269" key="51">
    <source>
    </source>
</evidence>
<evidence type="ECO:0000269" key="52">
    <source>
    </source>
</evidence>
<evidence type="ECO:0000269" key="53">
    <source>
    </source>
</evidence>
<evidence type="ECO:0000269" key="54">
    <source>
    </source>
</evidence>
<evidence type="ECO:0000269" key="55">
    <source>
    </source>
</evidence>
<evidence type="ECO:0000269" key="56">
    <source>
    </source>
</evidence>
<evidence type="ECO:0000269" key="57">
    <source>
    </source>
</evidence>
<evidence type="ECO:0000269" key="58">
    <source>
    </source>
</evidence>
<evidence type="ECO:0000303" key="59">
    <source>
    </source>
</evidence>
<evidence type="ECO:0000305" key="60"/>
<evidence type="ECO:0000312" key="61">
    <source>
        <dbReference type="HGNC" id="HGNC:9008"/>
    </source>
</evidence>
<evidence type="ECO:0007744" key="62">
    <source>
        <dbReference type="PDB" id="6A70"/>
    </source>
</evidence>
<evidence type="ECO:0007829" key="63">
    <source>
        <dbReference type="PDB" id="1B4R"/>
    </source>
</evidence>
<accession>P98161</accession>
<accession>Q15140</accession>
<accession>Q15141</accession>
<protein>
    <recommendedName>
        <fullName evidence="60">Polycystin-1</fullName>
        <shortName>PC1</shortName>
    </recommendedName>
    <alternativeName>
        <fullName>Autosomal dominant polycystic kidney disease 1 protein</fullName>
    </alternativeName>
</protein>
<keyword id="KW-0002">3D-structure</keyword>
<keyword id="KW-0025">Alternative splicing</keyword>
<keyword id="KW-0068">Autocatalytic cleavage</keyword>
<keyword id="KW-1003">Cell membrane</keyword>
<keyword id="KW-0966">Cell projection</keyword>
<keyword id="KW-1186">Ciliopathy</keyword>
<keyword id="KW-0969">Cilium</keyword>
<keyword id="KW-0175">Coiled coil</keyword>
<keyword id="KW-0225">Disease variant</keyword>
<keyword id="KW-1015">Disulfide bond</keyword>
<keyword id="KW-0256">Endoplasmic reticulum</keyword>
<keyword id="KW-0325">Glycoprotein</keyword>
<keyword id="KW-0333">Golgi apparatus</keyword>
<keyword id="KW-0430">Lectin</keyword>
<keyword id="KW-0433">Leucine-rich repeat</keyword>
<keyword id="KW-0472">Membrane</keyword>
<keyword id="KW-0597">Phosphoprotein</keyword>
<keyword id="KW-1267">Proteomics identification</keyword>
<keyword id="KW-1185">Reference proteome</keyword>
<keyword id="KW-0677">Repeat</keyword>
<keyword id="KW-0964">Secreted</keyword>
<keyword id="KW-0732">Signal</keyword>
<keyword id="KW-0812">Transmembrane</keyword>
<keyword id="KW-1133">Transmembrane helix</keyword>
<keyword id="KW-0879">Wnt signaling pathway</keyword>
<reference key="1">
    <citation type="journal article" date="1995" name="Cell">
        <title>Polycystic kidney disease: the complete structure of the PKD1 gene and its protein.</title>
        <authorList>
            <person name="Gluecksmann-Kuis M.A."/>
            <person name="Tayber O."/>
            <person name="Woolf E.A."/>
            <person name="Bougueleret L."/>
            <person name="Deng N."/>
            <person name="Alperin G.D."/>
            <person name="Iris F."/>
            <person name="Hawkins F."/>
            <person name="Munro C."/>
            <person name="Lakey N."/>
            <person name="Duyk G."/>
            <person name="Schneider M.C."/>
            <person name="Geng L."/>
            <person name="Zhang F."/>
            <person name="Zhao Z."/>
            <person name="Torosian S."/>
            <person name="Reeders S.T."/>
            <person name="Bork P."/>
            <person name="Pohlschmidt M."/>
            <person name="Loehning C."/>
            <person name="Kraus B."/>
            <person name="Nowicka U."/>
            <person name="Leung A.L.S."/>
            <person name="Frischauf A.-M."/>
        </authorList>
    </citation>
    <scope>NUCLEOTIDE SEQUENCE [MRNA] (ISOFORM 1)</scope>
    <scope>VARIANT THR-1092</scope>
</reference>
<reference key="2">
    <citation type="journal article" date="1995" name="Nat. Genet.">
        <title>The polycystic kidney disease 1 (PKD1) gene encodes a novel protein with multiple cell recognition domains.</title>
        <authorList>
            <person name="Hughes J."/>
            <person name="Ward C.J."/>
            <person name="Peral B."/>
            <person name="Aspinwall R."/>
            <person name="Clark K."/>
            <person name="San Millan J.L."/>
            <person name="Gamble V."/>
            <person name="Harris P.C."/>
        </authorList>
    </citation>
    <scope>NUCLEOTIDE SEQUENCE [GENOMIC DNA / MRNA] (ISOFORMS 2 AND 3)</scope>
    <scope>VARIANT GLN-739</scope>
</reference>
<reference key="3">
    <citation type="journal article" date="2004" name="Nature">
        <title>The sequence and analysis of duplication-rich human chromosome 16.</title>
        <authorList>
            <person name="Martin J."/>
            <person name="Han C."/>
            <person name="Gordon L.A."/>
            <person name="Terry A."/>
            <person name="Prabhakar S."/>
            <person name="She X."/>
            <person name="Xie G."/>
            <person name="Hellsten U."/>
            <person name="Chan Y.M."/>
            <person name="Altherr M."/>
            <person name="Couronne O."/>
            <person name="Aerts A."/>
            <person name="Bajorek E."/>
            <person name="Black S."/>
            <person name="Blumer H."/>
            <person name="Branscomb E."/>
            <person name="Brown N.C."/>
            <person name="Bruno W.J."/>
            <person name="Buckingham J.M."/>
            <person name="Callen D.F."/>
            <person name="Campbell C.S."/>
            <person name="Campbell M.L."/>
            <person name="Campbell E.W."/>
            <person name="Caoile C."/>
            <person name="Challacombe J.F."/>
            <person name="Chasteen L.A."/>
            <person name="Chertkov O."/>
            <person name="Chi H.C."/>
            <person name="Christensen M."/>
            <person name="Clark L.M."/>
            <person name="Cohn J.D."/>
            <person name="Denys M."/>
            <person name="Detter J.C."/>
            <person name="Dickson M."/>
            <person name="Dimitrijevic-Bussod M."/>
            <person name="Escobar J."/>
            <person name="Fawcett J.J."/>
            <person name="Flowers D."/>
            <person name="Fotopulos D."/>
            <person name="Glavina T."/>
            <person name="Gomez M."/>
            <person name="Gonzales E."/>
            <person name="Goodstein D."/>
            <person name="Goodwin L.A."/>
            <person name="Grady D.L."/>
            <person name="Grigoriev I."/>
            <person name="Groza M."/>
            <person name="Hammon N."/>
            <person name="Hawkins T."/>
            <person name="Haydu L."/>
            <person name="Hildebrand C.E."/>
            <person name="Huang W."/>
            <person name="Israni S."/>
            <person name="Jett J."/>
            <person name="Jewett P.B."/>
            <person name="Kadner K."/>
            <person name="Kimball H."/>
            <person name="Kobayashi A."/>
            <person name="Krawczyk M.-C."/>
            <person name="Leyba T."/>
            <person name="Longmire J.L."/>
            <person name="Lopez F."/>
            <person name="Lou Y."/>
            <person name="Lowry S."/>
            <person name="Ludeman T."/>
            <person name="Manohar C.F."/>
            <person name="Mark G.A."/>
            <person name="McMurray K.L."/>
            <person name="Meincke L.J."/>
            <person name="Morgan J."/>
            <person name="Moyzis R.K."/>
            <person name="Mundt M.O."/>
            <person name="Munk A.C."/>
            <person name="Nandkeshwar R.D."/>
            <person name="Pitluck S."/>
            <person name="Pollard M."/>
            <person name="Predki P."/>
            <person name="Parson-Quintana B."/>
            <person name="Ramirez L."/>
            <person name="Rash S."/>
            <person name="Retterer J."/>
            <person name="Ricke D.O."/>
            <person name="Robinson D.L."/>
            <person name="Rodriguez A."/>
            <person name="Salamov A."/>
            <person name="Saunders E.H."/>
            <person name="Scott D."/>
            <person name="Shough T."/>
            <person name="Stallings R.L."/>
            <person name="Stalvey M."/>
            <person name="Sutherland R.D."/>
            <person name="Tapia R."/>
            <person name="Tesmer J.G."/>
            <person name="Thayer N."/>
            <person name="Thompson L.S."/>
            <person name="Tice H."/>
            <person name="Torney D.C."/>
            <person name="Tran-Gyamfi M."/>
            <person name="Tsai M."/>
            <person name="Ulanovsky L.E."/>
            <person name="Ustaszewska A."/>
            <person name="Vo N."/>
            <person name="White P.S."/>
            <person name="Williams A.L."/>
            <person name="Wills P.L."/>
            <person name="Wu J.-R."/>
            <person name="Wu K."/>
            <person name="Yang J."/>
            <person name="DeJong P."/>
            <person name="Bruce D."/>
            <person name="Doggett N.A."/>
            <person name="Deaven L."/>
            <person name="Schmutz J."/>
            <person name="Grimwood J."/>
            <person name="Richardson P."/>
            <person name="Rokhsar D.S."/>
            <person name="Eichler E.E."/>
            <person name="Gilna P."/>
            <person name="Lucas S.M."/>
            <person name="Myers R.M."/>
            <person name="Rubin E.M."/>
            <person name="Pennacchio L.A."/>
        </authorList>
    </citation>
    <scope>NUCLEOTIDE SEQUENCE [LARGE SCALE GENOMIC DNA]</scope>
</reference>
<reference key="4">
    <citation type="journal article" date="1994" name="Cell">
        <title>The polycystic kidney disease 1 gene encodes a 14 kb transcript and lies within a duplicated region on chromosome 16.</title>
        <authorList>
            <person name="Ward C.J."/>
            <person name="Peral B."/>
            <person name="Hughes J."/>
            <person name="Thomas S."/>
            <person name="Gamble V."/>
            <person name="Maccarthy A.B."/>
            <person name="Sloane-Stanley J."/>
            <person name="Buckle V.J."/>
            <person name="Kearney L."/>
            <person name="Higgs D.R."/>
            <person name="Ratcliffe P.J."/>
            <person name="Harris P.C."/>
            <person name="Roelfsema J.H."/>
            <person name="Spruit L.L."/>
            <person name="Saris J.J."/>
            <person name="Dauwerse H.G."/>
            <person name="Peters D.J.M."/>
            <person name="Breuning M.H."/>
            <person name="Nellist M."/>
            <person name="Brook-Carter P.T."/>
            <person name="Maheshwar M.M."/>
            <person name="Cordeiro I."/>
            <person name="Santos H."/>
            <person name="Cabral P."/>
            <person name="Sampson J.R."/>
            <person name="Janssen B."/>
            <person name="Hesseling-Janssen A.L.W."/>
            <person name="van den Ouweland A.M.W."/>
            <person name="Eussen B."/>
            <person name="Verhoef S."/>
            <person name="Lindhout D."/>
            <person name="Halley D.J.J."/>
        </authorList>
    </citation>
    <scope>NUCLEOTIDE SEQUENCE [GENOMIC DNA / MRNA] OF 2769-4303</scope>
</reference>
<reference key="5">
    <citation type="journal article" date="1994" name="Cell">
        <authorList>
            <person name="Ward C.J."/>
            <person name="Peral B."/>
            <person name="Hughes J."/>
            <person name="Thomas S."/>
            <person name="Gamble V."/>
            <person name="Maccarthy A.B."/>
            <person name="Sloane-Stanley J."/>
            <person name="Buckle V.J."/>
            <person name="Kearney L."/>
            <person name="Higgs D.R."/>
            <person name="Ratcliffe P.J."/>
            <person name="Harris P.C."/>
            <person name="Roelfsema J.H."/>
            <person name="Spruit L.L."/>
            <person name="Saris J.J."/>
            <person name="Dauwerse H.G."/>
            <person name="Peters D.J.M."/>
            <person name="Breuning M.H."/>
            <person name="Nellist M."/>
            <person name="Brook-Carter P.T."/>
            <person name="Maheshwar M.M."/>
            <person name="Cordeiro I."/>
            <person name="Santos H."/>
            <person name="Cabral P."/>
            <person name="Sampson J.R."/>
            <person name="Janssen B."/>
            <person name="Hesseling-Janssen A.L.W."/>
            <person name="van den Ouweland A.M.W."/>
            <person name="Eussen B."/>
            <person name="Verhoef S."/>
            <person name="Lindhout D."/>
            <person name="Halley D.J.J."/>
        </authorList>
    </citation>
    <scope>ERRATUM OF PUBMED:8004675</scope>
</reference>
<reference key="6">
    <citation type="journal article" date="1999" name="Proc. Natl. Acad. Sci. U.S.A.">
        <title>Interaction between RGS7 and polycystin.</title>
        <authorList>
            <person name="Kim E."/>
            <person name="Arnould T."/>
            <person name="Sellin L."/>
            <person name="Benzing T."/>
            <person name="Comella N."/>
            <person name="Kocher O."/>
            <person name="Tsiokas L."/>
            <person name="Sukhatme V.P."/>
            <person name="Walz G."/>
        </authorList>
    </citation>
    <scope>INTERACTION WITH RGS7</scope>
    <scope>SUBCELLULAR LOCATION</scope>
</reference>
<reference key="7">
    <citation type="journal article" date="2002" name="Proc. Natl. Acad. Sci. U.S.A.">
        <title>Cleavage of polycystin-1 requires the receptor for egg jelly domain and is disrupted by human autosomal-dominant polycystic kidney disease 1-associated mutations.</title>
        <authorList>
            <person name="Qian F."/>
            <person name="Boletta A."/>
            <person name="Bhunia A.K."/>
            <person name="Xu H."/>
            <person name="Liu L."/>
            <person name="Ahrabi A.K."/>
            <person name="Watnick T.J."/>
            <person name="Zhou F."/>
            <person name="Germino G.G."/>
        </authorList>
    </citation>
    <scope>FUNCTION IN RENAL TUBULOGENESIS</scope>
    <scope>AUTOCATALYTIC CLEAVAGE AT LEU-3048</scope>
    <scope>CHARACTERIZATION OF VARIANTS PKD1 LYS-2771; PRO-2921; PRO-2993 AND ARG-3016</scope>
    <scope>CHARACTERIZATION OF VARIANT GLN-2791</scope>
</reference>
<reference key="8">
    <citation type="journal article" date="2007" name="J. Biol. Chem.">
        <title>Characterization of cis-autoproteolysis of polycystin-1, the product of human polycystic kidney disease 1 gene.</title>
        <authorList>
            <person name="Wei W."/>
            <person name="Hackmann K."/>
            <person name="Xu H."/>
            <person name="Germino G."/>
            <person name="Qian F."/>
        </authorList>
    </citation>
    <scope>AUTOCATALYTIC CLEAVAGE AT LEU-3048</scope>
    <scope>MUTAGENESIS OF THR-3049</scope>
</reference>
<reference key="9">
    <citation type="journal article" date="2008" name="Biochim. Biophys. Acta">
        <title>Protein kinase X (PRKX) can rescue the effects of polycystic kidney disease-1 gene (PKD1) deficiency.</title>
        <authorList>
            <person name="Li X."/>
            <person name="Burrow C.R."/>
            <person name="Polgar K."/>
            <person name="Hyink D.P."/>
            <person name="Gusella G.L."/>
            <person name="Wilson P.D."/>
        </authorList>
    </citation>
    <scope>PHOSPHORYLATION AT SER-4166</scope>
    <scope>INTERACTION WITH PRKX</scope>
</reference>
<reference key="10">
    <citation type="journal article" date="2010" name="Mol. Biol. Cell">
        <title>Protein kinase D-mediated phosphorylation of polycystin-2 (TRPP2) is essential for its effects on cell growth and calcium channel activity.</title>
        <authorList>
            <person name="Streets A.J."/>
            <person name="Needham A.J."/>
            <person name="Gill S.K."/>
            <person name="Ong A.C."/>
        </authorList>
    </citation>
    <scope>INTERACTION WITH PKD2</scope>
</reference>
<reference key="11">
    <citation type="journal article" date="2010" name="Mol. Biol. Cell">
        <title>Polycystin-1 surface localization is stimulated by polycystin-2 and cleavage at the G protein-coupled receptor proteolytic site.</title>
        <authorList>
            <person name="Chapin H.C."/>
            <person name="Rajendran V."/>
            <person name="Caplan M.J."/>
        </authorList>
    </citation>
    <scope>SUBCELLULAR LOCATION</scope>
</reference>
<reference key="12">
    <citation type="journal article" date="2010" name="PLoS ONE">
        <title>Nephrocystin-1 forms a complex with polycystin-1 via a polyproline motif/SH3 domain interaction and regulates the apoptotic response in mammals.</title>
        <authorList>
            <person name="Wodarczyk C."/>
            <person name="Distefano G."/>
            <person name="Rowe I."/>
            <person name="Gaetani M."/>
            <person name="Bricoli B."/>
            <person name="Muorah M."/>
            <person name="Spitaleri A."/>
            <person name="Mannella V."/>
            <person name="Ricchiuto P."/>
            <person name="Pema M."/>
            <person name="Castelli M."/>
            <person name="Casanova A.E."/>
            <person name="Mollica L."/>
            <person name="Banzi M."/>
            <person name="Boca M."/>
            <person name="Antignac C."/>
            <person name="Saunier S."/>
            <person name="Musco G."/>
            <person name="Boletta A."/>
        </authorList>
    </citation>
    <scope>INTERACTION WITH NPHP1</scope>
</reference>
<reference key="13">
    <citation type="journal article" date="2014" name="Hum. Mol. Genet.">
        <title>Bardet-Biedl syndrome proteins 1 and 3 regulate the ciliary trafficking of polycystic kidney disease 1 protein.</title>
        <authorList>
            <person name="Su X."/>
            <person name="Driscoll K."/>
            <person name="Yao G."/>
            <person name="Raed A."/>
            <person name="Wu M."/>
            <person name="Beales P.L."/>
            <person name="Zhou J."/>
        </authorList>
    </citation>
    <scope>INTERACTION WITH BBS1; BBS4; BBS5 AND TTC8</scope>
</reference>
<reference key="14">
    <citation type="journal article" date="2016" name="Am. J. Hum. Genet.">
        <title>Mutations in GANAB, encoding the glucosidase IIalpha subunit, cause autosomal-dominant polycystic kidney and liver disease.</title>
        <authorList>
            <consortium name="Genkyst Study Group, HALT Progression of Polycystic Kidney Disease Group"/>
            <consortium name="Consortium for Radiologic Imaging Studies of Polycystic Kidney Disease"/>
            <person name="Porath B."/>
            <person name="Gainullin V.G."/>
            <person name="Cornec-Le Gall E."/>
            <person name="Dillinger E.K."/>
            <person name="Heyer C.M."/>
            <person name="Hopp K."/>
            <person name="Edwards M.E."/>
            <person name="Madsen C.D."/>
            <person name="Mauritz S.R."/>
            <person name="Banks C.J."/>
            <person name="Baheti S."/>
            <person name="Reddy B."/>
            <person name="Herrero J.I."/>
            <person name="Banales J.M."/>
            <person name="Hogan M.C."/>
            <person name="Tasic V."/>
            <person name="Watnick T.J."/>
            <person name="Chapman A.B."/>
            <person name="Vigneau C."/>
            <person name="Lavainne F."/>
            <person name="Audrezet M.P."/>
            <person name="Ferec C."/>
            <person name="Le Meur Y."/>
            <person name="Torres V.E."/>
            <person name="Harris P.C."/>
        </authorList>
    </citation>
    <scope>SUBCELLULAR LOCATION</scope>
</reference>
<reference key="15">
    <citation type="journal article" date="2016" name="Nat. Cell Biol.">
        <title>The polycystin complex mediates Wnt/Ca(2+) signalling.</title>
        <authorList>
            <person name="Kim S."/>
            <person name="Nie H."/>
            <person name="Nesin V."/>
            <person name="Tran U."/>
            <person name="Outeda P."/>
            <person name="Bai C.X."/>
            <person name="Keeling J."/>
            <person name="Maskey D."/>
            <person name="Watnick T."/>
            <person name="Wessely O."/>
            <person name="Tsiokas L."/>
        </authorList>
    </citation>
    <scope>FUNCTION</scope>
    <scope>INTERACTION WITH DVL1; DVL2; WNT3A; WNT4; WNT5A AND WNT9B</scope>
    <scope>SUBCELLULAR LOCATION</scope>
    <scope>CHARACTERIZATION OF VARIANT ILE-99</scope>
</reference>
<reference key="16">
    <citation type="journal article" date="2023" name="Cells">
        <title>Polycystin-1 Interacting Protein-1 (CU062) Interacts with the Ectodomain of Polycystin-1 (PC1).</title>
        <authorList>
            <person name="Lea W.A."/>
            <person name="Winklhofer T."/>
            <person name="Zelenchuk L."/>
            <person name="Sharma M."/>
            <person name="Rossol-Allison J."/>
            <person name="Fields T.A."/>
            <person name="Reif G."/>
            <person name="Calvet J.P."/>
            <person name="Bakeberg J.L."/>
            <person name="Wallace D.P."/>
            <person name="Ward C.J."/>
        </authorList>
    </citation>
    <scope>FUNCTION</scope>
    <scope>INTERACTION WITH EPCIP</scope>
    <scope>SUBCELLULAR LOCATION</scope>
    <scope>GLYCOSYLATION</scope>
</reference>
<reference key="17">
    <citation type="journal article" date="1999" name="EMBO J.">
        <title>The structure of a PKD domain from polycystin-1: implications for polycystic kidney disease.</title>
        <authorList>
            <person name="Bycroft M."/>
            <person name="Bateman A."/>
            <person name="Clarke J."/>
            <person name="Hamill S.J."/>
            <person name="Sandford R."/>
            <person name="Thomas R.L."/>
            <person name="Chothia C."/>
        </authorList>
    </citation>
    <scope>STRUCTURE BY NMR OF 275-354</scope>
</reference>
<reference evidence="62" key="18">
    <citation type="journal article" date="2018" name="Science">
        <title>Structure of the human PKD1-PKD2 complex.</title>
        <authorList>
            <person name="Su Q."/>
            <person name="Hu F."/>
            <person name="Ge X."/>
            <person name="Lei J."/>
            <person name="Yu S."/>
            <person name="Wang T."/>
            <person name="Zhou Q."/>
            <person name="Mei C."/>
            <person name="Shi Y."/>
        </authorList>
    </citation>
    <scope>STRUCTURE BY ELECTRON MICROSCOPY (3.60 ANGSTROMS) OF 3049-4169 IN COMPLEX WITH PKD2</scope>
    <scope>SUBUNIT</scope>
    <scope>SUBCELLULAR LOCATION</scope>
    <scope>TOPOLOGY</scope>
</reference>
<reference key="19">
    <citation type="journal article" date="2001" name="Trends Pharmacol. Sci.">
        <title>Polycystin channels and kidney disease.</title>
        <authorList>
            <person name="Stayner C."/>
            <person name="Zhou J."/>
        </authorList>
    </citation>
    <scope>REVIEW</scope>
</reference>
<reference key="20">
    <citation type="journal article" date="1996" name="Am. J. Hum. Genet.">
        <title>Screening the 3' region of the polycystic kidney disease 1 (PKD1) gene reveals six novel mutations.</title>
        <authorList>
            <person name="Peral B."/>
            <person name="San Millan J.L."/>
            <person name="Ong A.C.M."/>
            <person name="Gamble V."/>
            <person name="Ward C.J."/>
            <person name="Strong C."/>
            <person name="Harris P.C."/>
        </authorList>
    </citation>
    <scope>VARIANT PKD1 3748-ARG--VAL-3752 DEL</scope>
    <scope>VARIANT ASP-3632</scope>
</reference>
<reference key="21">
    <citation type="journal article" date="1997" name="Am. J. Hum. Genet.">
        <title>Identification of mutations in the duplicated region of the polycystic kidney disease 1 gene (PKD1) by a novel approach.</title>
        <authorList>
            <person name="Peral B."/>
            <person name="Gamble V."/>
            <person name="Strong C."/>
            <person name="Ong A.C.M."/>
            <person name="Sloane-Stanley J."/>
            <person name="Zerres K."/>
            <person name="Winearls C.G."/>
            <person name="Harris P.C."/>
        </authorList>
    </citation>
    <scope>VARIANTS PKD1 PRO-2993; ARG-3016 AND VAL-3511</scope>
    <scope>VARIANTS MET-3510 AND PHE-4190</scope>
</reference>
<reference key="22">
    <citation type="journal article" date="1997" name="Hum. Genet.">
        <title>New amino acid polymorphism, Ala/Val4058, in exon 45 of the polycystic kidney disease 1 gene: evolution of alleles.</title>
        <authorList>
            <person name="Constantinides R."/>
            <person name="Xenophontos S.L."/>
            <person name="Neophytou P."/>
            <person name="Nomura S."/>
            <person name="Pierides A."/>
            <person name="Constantinou-Deltas C.D."/>
        </authorList>
    </citation>
    <scope>VARIANT ALA-4058</scope>
</reference>
<reference key="23">
    <citation type="journal article" date="1997" name="Hum. Mol. Genet.">
        <title>An unusual pattern of mutation in the duplicated portion of PKD1 is revealed by use of a novel strategy for mutation detection.</title>
        <authorList>
            <person name="Watnick T.J."/>
            <person name="Piontek K.B."/>
            <person name="Cordal T.M."/>
            <person name="Weber H."/>
            <person name="Gandolph M.A."/>
            <person name="Qian F."/>
            <person name="Lens X.M."/>
            <person name="Neumann H.P.H."/>
            <person name="Germino G.G."/>
        </authorList>
    </citation>
    <scope>VARIANTS PKD1 THR-2760; PRO-2761; VAL-2763; THR-2764; GLN-2791; THR-2826 AND LEU-3008</scope>
    <scope>VARIANT LEU-3066</scope>
</reference>
<reference key="24">
    <citation type="journal article" date="1997" name="Hum. Mutat.">
        <title>Three novel mutations of the PKD1 gene in Italian families with autosomal dominant polycystic kidney disease.</title>
        <authorList>
            <person name="Turco A.E."/>
            <person name="Rossetti S."/>
            <person name="Bresin E."/>
            <person name="Englisch S."/>
            <person name="Corra S."/>
            <person name="Pignatti P.F."/>
        </authorList>
    </citation>
    <scope>VARIANT PKD1 THR-3678</scope>
</reference>
<reference key="25">
    <citation type="journal article" date="1998" name="Hum. Genet.">
        <title>Novel and recurrent mutations in the PKD1 (polycystic kidney disease) gene.</title>
        <authorList>
            <person name="Daniells C."/>
            <person name="Maheshwar M.M."/>
            <person name="Lazarou L."/>
            <person name="Davies F."/>
            <person name="Coles G."/>
            <person name="Ravine D."/>
        </authorList>
    </citation>
    <scope>VARIANT PKD1 ASP-4032</scope>
    <scope>VARIANT VAL-4045</scope>
</reference>
<reference key="26">
    <citation type="journal article" date="1998" name="Hum. Genet.">
        <title>Loss of heterozygosity in polycystic kidney disease with a missense mutation in the repeated region of PKD1.</title>
        <authorList>
            <person name="Koptides M."/>
            <person name="Constantinides R."/>
            <person name="Kyriakides G."/>
            <person name="Hadjigavriel M."/>
            <person name="Patsalis P.C."/>
            <person name="Pierides A."/>
            <person name="Deltas C.C."/>
        </authorList>
    </citation>
    <scope>VARIANT PKD1 MET-3375</scope>
</reference>
<reference key="27">
    <citation type="journal article" date="1999" name="Am. J. Hum. Genet.">
        <title>Identification of mutations in the repeated part of the autosomal dominant polycystic kidney disease type 1 gene, PKD1, by long-range PCR.</title>
        <authorList>
            <person name="Thomas R.L."/>
            <person name="McConnell R."/>
            <person name="Whittacker J."/>
            <person name="Kirkpatrick P."/>
            <person name="Bradley J."/>
            <person name="Sandford R."/>
        </authorList>
    </citation>
    <scope>VARIANTS PKD1 LEU-324 AND SER-845</scope>
    <scope>VARIANTS ARG-1399 AND LEU-1786</scope>
</reference>
<reference key="28">
    <citation type="journal article" date="1999" name="Am. J. Hum. Genet.">
        <title>Mutation detection of PKD1 identifies a novel mutation common to three families with aneurysms and/or very-early-onset disease.</title>
        <authorList>
            <person name="Watnick T."/>
            <person name="Phakdeekitcharoen B."/>
            <person name="Johnson A."/>
            <person name="Gandolph M.A."/>
            <person name="Wang M."/>
            <person name="Briefel G."/>
            <person name="Klinger K.W."/>
            <person name="Kimberling W."/>
            <person name="Gabow P."/>
            <person name="Germino G.G."/>
        </authorList>
    </citation>
    <scope>VARIANTS PKD1 PRO-2392 AND PHE-2423</scope>
    <scope>VARIANTS ARG-1399; GLN-2548 AND ARG-2638</scope>
</reference>
<reference key="29">
    <citation type="journal article" date="1999" name="Hum. Genet.">
        <title>DGGE screening of PKD1 gene reveals novel mutations in a large cohort of 146 unrelated patients.</title>
        <authorList>
            <person name="Perrichot R.A."/>
            <person name="Mercier B."/>
            <person name="Simon P.M."/>
            <person name="Whebe B."/>
            <person name="Cledes J."/>
            <person name="Ferec C."/>
        </authorList>
    </citation>
    <scope>VARIANTS PKD1 LEU-LEU-PHE-3996 INS; GLY-4136 AND CYS-4154</scope>
    <scope>VARIANTS</scope>
</reference>
<reference key="30">
    <citation type="journal article" date="1999" name="Hum. Genet.">
        <title>Novel mutations in the 3 region of the polycystic kidney disease 1 (PKD1) gene.</title>
        <authorList>
            <person name="Afzal A.R."/>
            <person name="Hand M."/>
            <person name="Ternes-Pereira E."/>
            <person name="Saggar-Malik A."/>
            <person name="Taylor R."/>
            <person name="Jeffery S."/>
        </authorList>
    </citation>
    <scope>VARIANTS PKD1 3748-ARG--VAL-3752 DEL AND LEU-4132 DEL</scope>
    <scope>VARIANT VAL-4045</scope>
</reference>
<reference key="31">
    <citation type="journal article" date="1999" name="Kidney Int.">
        <title>Mutational analysis within the 3' region of the PKD1 gene.</title>
        <authorList>
            <person name="Badenas C."/>
            <person name="Torra R."/>
            <person name="San Millan J.L."/>
            <person name="Lucero L."/>
            <person name="Mila M."/>
            <person name="Estivill X."/>
            <person name="Darnell A."/>
        </authorList>
    </citation>
    <scope>VARIANTS PKD1 PRO-4225 AND TRP-4276</scope>
</reference>
<reference key="32">
    <citation type="journal article" date="2000" name="Eur. J. Hum. Genet.">
        <title>Novel mutations in the duplicated region of PKD1 gene.</title>
        <authorList>
            <person name="Perrichot R."/>
            <person name="Mercier B."/>
            <person name="Quere I."/>
            <person name="Carre A."/>
            <person name="Simon P."/>
            <person name="Whebe B."/>
            <person name="Cledes J."/>
            <person name="Ferec C."/>
        </authorList>
    </citation>
    <scope>VARIANTS PKD1 MET-2250; TRP-2329 AND CYS-2379</scope>
    <scope>VARIANTS LEU-3066; VAL-3139 AND LEU-3193</scope>
</reference>
<reference key="33">
    <citation type="journal article" date="2000" name="Genet. Test.">
        <title>Novel mutations in the duplicated region of the polycystic kidney disease 1 (PKD1) gene provides supporting evidence for gene conversion.</title>
        <authorList>
            <person name="Afzal A.R."/>
            <person name="Florencio R.N."/>
            <person name="Taylor R."/>
            <person name="Patton M.A."/>
            <person name="Saggar-Malik A."/>
            <person name="Jeffery S."/>
        </authorList>
    </citation>
    <scope>VARIANTS PKD1 HIS-3247 AND MET-3382</scope>
</reference>
<reference key="34">
    <citation type="journal article" date="2000" name="Hum. Mutat.">
        <title>Screening of the PKD1 duplicated region reveals multiple single nucleotide polymorphisms and a de novo mutation in Hellenic polycystic kidney disease families.</title>
        <authorList>
            <person name="Koptides M."/>
            <person name="Mean R."/>
            <person name="Demetriou K."/>
            <person name="Constantinides R."/>
            <person name="Pierides A."/>
            <person name="Harris P.C."/>
            <person name="Deltas C.C."/>
        </authorList>
    </citation>
    <scope>VARIANTS PKD1 PRO-2921 AND MET-3375</scope>
    <scope>VARIANT LEU-3066</scope>
</reference>
<reference key="35">
    <citation type="journal article" date="2000" name="Hum. Mutat.">
        <title>Novel splicing and missense mutations in autosomal dominant polycystic kidney disease 1 (PKD1) gene: expression of mutated genes.</title>
        <authorList>
            <person name="Aguiari G."/>
            <person name="Savelli S."/>
            <person name="Garbo M."/>
            <person name="Bozza A."/>
            <person name="Augello G."/>
            <person name="Penolazzi L."/>
            <person name="De Paoli Vitali E."/>
            <person name="La Torre C."/>
            <person name="Cappelli G."/>
            <person name="Piva R."/>
            <person name="del Senno L."/>
        </authorList>
    </citation>
    <scope>VARIANTS PKD1 GLN-3719 AND PRO-3852</scope>
    <scope>VARIANT VAL-4045</scope>
</reference>
<reference key="36">
    <citation type="journal article" date="2000" name="Kidney Int.">
        <title>Thirteen novel mutations of the replicated region of PKD1 in an Asian population.</title>
        <authorList>
            <person name="Phakdeekitcharoen B."/>
            <person name="Watnick T.J."/>
            <person name="Ahn C."/>
            <person name="Whang D.-Y."/>
            <person name="Burkhart B."/>
            <person name="Germino G.G."/>
        </authorList>
    </citation>
    <scope>VARIANTS PKD1 SER-1166; GLU-1956; CYS-2408 AND GLY-2443 INS</scope>
    <scope>VARIANTS HIS-1995 AND ASN-2604</scope>
</reference>
<reference key="37">
    <citation type="journal article" date="2000" name="Mutat. Res.">
        <title>Novel mutations of the PKD1 gene in Korean patients with autosomal dominant polycystic kidney disease.</title>
        <authorList>
            <person name="Kim U.K."/>
            <person name="Jin D.K."/>
            <person name="Ahn C."/>
            <person name="Shin J.H."/>
            <person name="Lee K.B."/>
            <person name="Kim S.H."/>
            <person name="Chae J.J."/>
            <person name="Hwang D.Y."/>
            <person name="Lee J.G."/>
            <person name="Namkoong Y."/>
            <person name="Lee C.C."/>
        </authorList>
    </citation>
    <scope>VARIANTS PKD1 TRP-3753 AND ASN-3815</scope>
</reference>
<reference key="38">
    <citation type="journal article" date="2001" name="Am. J. Hum. Genet.">
        <title>Mutation analysis of the entire PKD1 gene: genetic and diagnostic implications.</title>
        <authorList>
            <person name="Rossetti S."/>
            <person name="Strmecki L."/>
            <person name="Gamble V."/>
            <person name="Burton S."/>
            <person name="Sneddon V."/>
            <person name="Peral B."/>
            <person name="Roy S."/>
            <person name="Bakkaloglu A."/>
            <person name="Komel R."/>
            <person name="Winearls C.G."/>
            <person name="Harris P.C."/>
        </authorList>
    </citation>
    <scope>VARIANTS PKD1 GLN-13; PHE-75; CYS-139; 1992-PHE-THR-1993 DELINS LEU; 2220-ARG--PRO-2224 DEL; ASP-2336; ASP-2752; ILE-LEU-MET-ARG-2765 INS; MET-2768; LYS-2771; PRO-2816; SER-2858; 3012-THR--TYR-3017 DEL AND 3748-LEU--ARG-3752 DEL</scope>
    <scope>VARIANTS SER-2674; MET-2708; THR-2734; LEU-2735; CYS-2765; MET-2782; ARG-2814; GLY-2888; ILE-2905; ASP-2966 AND LEU-3066</scope>
</reference>
<reference key="39">
    <citation type="journal article" date="2001" name="Eur. J. Hum. Genet.">
        <title>Novel PKD1 deletions and missense variants in a cohort of Hellenic polycystic kidney disease families.</title>
        <authorList>
            <person name="Bouba I."/>
            <person name="Koptides M."/>
            <person name="Mean R."/>
            <person name="Costi C.-E."/>
            <person name="Demetriou K."/>
            <person name="Georgiou I."/>
            <person name="Pierides A."/>
            <person name="Siamopoulos K."/>
            <person name="Deltas C.C."/>
        </authorList>
    </citation>
    <scope>VARIANTS PKD1 LEU-2471; LEU-2519; GLY-2579 DEL; LEU-2613 DEL; ILE-2649 AND PHE-2978 DEL</scope>
    <scope>VARIANTS MET-2582; ARG-2638; ASN-2972 AND LEU-3066</scope>
</reference>
<reference key="40">
    <citation type="journal article" date="2001" name="J. Am. Soc. Nephrol.">
        <title>Mutation analysis of the entire replicated portion of PKD1 using genomic DNA samples.</title>
        <authorList>
            <person name="Phakdeekitcharoen B."/>
            <person name="Watnick T.J."/>
            <person name="Germino G.G."/>
        </authorList>
    </citation>
    <scope>VARIANTS PKD1 ARG-967; ARG-2696; GLY-2985; CYS-3039 AND ILE-3285</scope>
    <scope>VARIANTS VAL-88 AND ARG-3311</scope>
</reference>
<reference key="41">
    <citation type="journal article" date="2001" name="J. Hum. Genet.">
        <title>Mutations of the PKD1 gene among Japanese autosomal dominant polycystic kidney disease patients, including one heterozygous mutation identified in members of the same family.</title>
        <authorList>
            <person name="Mizoguchi M."/>
            <person name="Tamura T."/>
            <person name="Yamaki A."/>
            <person name="Higashihara E."/>
            <person name="Shimizu Y."/>
        </authorList>
    </citation>
    <scope>INVOLVEMENT IN PKD1</scope>
    <scope>VARIANTS MET-3008 AND MET-3510</scope>
</reference>
<reference key="42">
    <citation type="journal article" date="2001" name="Mutat. Res.">
        <title>Mutational analysis within the 3' region of the PKD1 gene in Japanese families.</title>
        <authorList>
            <person name="Tsuchiya K."/>
            <person name="Komeda M."/>
            <person name="Takahashi M."/>
            <person name="Yamashita N."/>
            <person name="Cigira M."/>
            <person name="Suzuki T."/>
            <person name="Suzuki K."/>
            <person name="Nihei H."/>
            <person name="Mochizuki T."/>
        </authorList>
    </citation>
    <scope>VARIANTS PKD1 ARG-3560; GLN-3719 AND TRP-3753</scope>
    <scope>VARIANT MET-3510</scope>
</reference>
<reference key="43">
    <citation type="journal article" date="2002" name="Clin. Genet.">
        <title>Three novel mutations of the PKD1 gene in Korean patients with autosomal dominant polycystic kidney disease.</title>
        <authorList>
            <person name="Eo H.-S."/>
            <person name="Lee J.G."/>
            <person name="Ahn C."/>
            <person name="Cho J.T."/>
            <person name="Hwang D.Y."/>
            <person name="Hwang Y.H."/>
            <person name="Lee E.J."/>
            <person name="Kim Y.S."/>
            <person name="Han J.S."/>
            <person name="Kim S."/>
            <person name="Lee J.S."/>
            <person name="Jeoung D.I."/>
            <person name="Lee S.E."/>
            <person name="Kim U.K."/>
        </authorList>
    </citation>
    <scope>VARIANTS PKD1 SER-3602 AND SER-4255</scope>
</reference>
<reference key="44">
    <citation type="journal article" date="2002" name="Hum. Mutat.">
        <title>Mutation detection in the duplicated region of the polycystic kidney disease 1 (PKD1) gene in PKD1-linked Australian families.</title>
        <authorList>
            <person name="McCluskey M."/>
            <person name="Schiavello T."/>
            <person name="Hunter M."/>
            <person name="Hantke J."/>
            <person name="Angelicheva D."/>
            <person name="Bogdanova N."/>
            <person name="Markoff A."/>
            <person name="Thomas M."/>
            <person name="Dworniczak B."/>
            <person name="Horst J."/>
            <person name="Kalaydjieva L."/>
        </authorList>
    </citation>
    <scope>VARIANTS PKD1 CYS-381; ASP-2185; THR-2421 DEL; ASP-2785 AND 3027-THR--ARG-3039 DEL</scope>
    <scope>VARIANTS GLN-739; THR-1092; ARG-1399; MET-1649; ARG-2638; CYS-2765 AND LEU-3066</scope>
</reference>
<reference key="45">
    <citation type="journal article" date="2002" name="Hum. Mutat.">
        <title>Mutation analysis in PKD1 of Japanese autosomal dominant polycystic kidney disease patients.</title>
        <authorList>
            <person name="Inoue S."/>
            <person name="Inoue K."/>
            <person name="Utsunomiya M."/>
            <person name="Nozaki J."/>
            <person name="Yamada Y."/>
            <person name="Iwasa T."/>
            <person name="Mori E."/>
            <person name="Yoshinaga T."/>
            <person name="Koizumi A."/>
        </authorList>
    </citation>
    <scope>VARIANTS PKD1 ILE-2083; ARG-2814 AND PRO-2816</scope>
    <scope>VARIANTS MET-87 AND MET-3510</scope>
</reference>
<reference key="46">
    <citation type="journal article" date="2002" name="J. Med. Genet.">
        <title>Mutation screening of the PKD1 transcript by RT-PCR.</title>
        <authorList>
            <person name="Burtey S."/>
            <person name="Lossi A.M."/>
            <person name="Bayle J."/>
            <person name="Berland Y."/>
            <person name="Fontes M."/>
        </authorList>
    </citation>
    <scope>VARIANT PKD1 HIS-987</scope>
    <scope>VARIANTS ARG-1399 AND VAL-4045</scope>
</reference>
<reference key="47">
    <citation type="journal article" date="2002" name="Kidney Int.">
        <title>A complete mutation screen of the ADPKD genes by DHPLC.</title>
        <authorList>
            <person name="Rossetti S."/>
            <person name="Chauveau D."/>
            <person name="Walker D."/>
            <person name="Saggar-Malik A."/>
            <person name="Winearls C.G."/>
            <person name="Torres V.E."/>
            <person name="Harris P.C."/>
        </authorList>
    </citation>
    <scope>VARIANTS PKD1 TRP-1340; LYS-1811; CYS-2092; ILE-2260 DEL; PHE-3167 AND PRO-3852</scope>
    <scope>VARIANTS LEU-61; SER-572; THR-1092; SER-1168; ARG-1399; LEU-1684; ILE-1943; ARG-2638; SER-2674; MET-2708; ARG-2814; LEU-2958; ASN-2977; MET-3057; GLN-3435; VAL-3512; VAL-4045; VAL-4059; SER-4124; ILE-4146 AND PHE-4190</scope>
</reference>
<reference key="48">
    <citation type="journal article" date="2002" name="Nephrol. Dial. Transplant.">
        <title>Novel mutations of PKD1 gene in Chinese patients with autosomal dominant polycystic kidney disease.</title>
        <authorList>
            <person name="Ding L."/>
            <person name="Zhang S."/>
            <person name="Qiu W."/>
            <person name="Xiao C."/>
            <person name="Wu S."/>
            <person name="Zhang G."/>
            <person name="Cheng L."/>
            <person name="Zhang S."/>
        </authorList>
    </citation>
    <scope>VARIANTS PKD1 ASP-3632; LEU-3649 AND THR-3678</scope>
    <scope>VARIANTS VAL-4045; VAL-4059; GLU-4102; PRO-4106 AND ILE-4146</scope>
</reference>
<reference key="49">
    <citation type="journal article" date="2003" name="Lancet">
        <title>Association of mutation position in polycystic kidney disease 1 (PKD1) gene and development of a vascular phenotype.</title>
        <authorList>
            <person name="Rossetti S."/>
            <person name="Chauveau D."/>
            <person name="Kubly V."/>
            <person name="Slezak J.M."/>
            <person name="Saggar-Malik A.K."/>
            <person name="Pei Y."/>
            <person name="Ong A.C.M."/>
            <person name="Stewart F."/>
            <person name="Watson M.L."/>
            <person name="Bergstralh E.J."/>
            <person name="Winearls C.G."/>
            <person name="Torres V.E."/>
            <person name="Harris P.C."/>
        </authorList>
    </citation>
    <scope>VARIANTS PKD1 ARG-164; GLY-210; ARG-508; ASP-690; ASN-1240 DEL; PRO-1667; LYS-1811; CYS-2092; CYS-2200; ILE-2260 DEL; ARG-2370; TYR-2373; LYS-2771; LEU-2802; ASN-3188 DEL; LEU-3355; PRO-3682 AND ARG-3751</scope>
</reference>
<reference key="50">
    <citation type="journal article" date="2005" name="J. Mol. Med.">
        <title>Genetics and phenotypic characteristics of autosomal dominant polycystic kidney disease in Finns.</title>
        <authorList>
            <person name="Peltola P."/>
            <person name="Lumiaho A."/>
            <person name="Miettinen R."/>
            <person name="Pihlajamaeki J."/>
            <person name="Sandford R."/>
            <person name="Laakso M."/>
        </authorList>
    </citation>
    <scope>VARIANTS PKD1 SER-845; MET-3138 AND PRO-3954</scope>
    <scope>VARIANTS HIS-36; ARG-2638; LEU-3066; MET-3510; VAL-3512; VAL-4045 AND VAL-4059</scope>
</reference>
<reference key="51">
    <citation type="journal article" date="2009" name="Hum. Mutat.">
        <title>Novel method for genomic analysis of PKD1 and PKD2 mutations in autosomal dominant polycystic kidney disease.</title>
        <authorList>
            <person name="Tan Y.-C."/>
            <person name="Blumenfeld J.D."/>
            <person name="Anghel R."/>
            <person name="Donahue S."/>
            <person name="Belenkaya R."/>
            <person name="Balina M."/>
            <person name="Parker T."/>
            <person name="Levine D."/>
            <person name="Leonard D.G.B."/>
            <person name="Rennert H."/>
        </authorList>
    </citation>
    <scope>VARIANTS PKD1 LEU-61; ILE-99; TYR-594; MET-1242; CYS-2200; LYS-2422; ARG-2638; LEU-3066; SER-3726 AND VAL-4155</scope>
    <scope>VARIANTS HIS-36; GLN-739; THR-1092; ARG-1399; THR-1516; THR-1871; VAL-1926; ASP-1952; MET-2708; ARG-2814; VAL-3512; VAL-4045 AND VAL-4059</scope>
</reference>
<reference key="52">
    <citation type="journal article" date="2011" name="Nephrol. Dial. Transplant.">
        <title>Novel PKD1 and PKD2 mutations in autosomal dominant polycystic kidney disease (ADPKD).</title>
        <authorList>
            <person name="Hoefele J."/>
            <person name="Mayer K."/>
            <person name="Scholz M."/>
            <person name="Klein H.G."/>
        </authorList>
    </citation>
    <scope>VARIANTS PKD1 GLY-97; ARG-436; PRO-442; ARG-727; PRO-727; ASP-2391; TRP-2434; TYR-2546; CYS-2569; THR-2646; ARG-2889; PRO-3154; ARG-3603 AND GLN-3750</scope>
</reference>
<reference key="53">
    <citation type="journal article" date="2012" name="Hum. Mutat.">
        <title>Autosomal dominant polycystic kidney disease: Comprehensive mutation analysis of PKD1 and PKD2 in 700 unrelated patients.</title>
        <authorList>
            <person name="Audrezet M.P."/>
            <person name="Gall E.C."/>
            <person name="Chen J.M."/>
            <person name="Redon S."/>
            <person name="Quere I."/>
            <person name="Creff J."/>
            <person name="Benech C."/>
            <person name="Maestri S."/>
            <person name="Meur Y.L."/>
            <person name="Ferec C."/>
        </authorList>
    </citation>
    <scope>VARIANTS PKD1 CYS-325; TRP-611; ASP-698; PRO-727; GLY-1206; CYS-2379; CYS-2767; LYS-2771; ARG-2995; SER-3651; GLN-3750; TRP-3753; CYS-4150 AND TRP-4276</scope>
</reference>
<proteinExistence type="evidence at protein level"/>
<organism>
    <name type="scientific">Homo sapiens</name>
    <name type="common">Human</name>
    <dbReference type="NCBI Taxonomy" id="9606"/>
    <lineage>
        <taxon>Eukaryota</taxon>
        <taxon>Metazoa</taxon>
        <taxon>Chordata</taxon>
        <taxon>Craniata</taxon>
        <taxon>Vertebrata</taxon>
        <taxon>Euteleostomi</taxon>
        <taxon>Mammalia</taxon>
        <taxon>Eutheria</taxon>
        <taxon>Euarchontoglires</taxon>
        <taxon>Primates</taxon>
        <taxon>Haplorrhini</taxon>
        <taxon>Catarrhini</taxon>
        <taxon>Hominidae</taxon>
        <taxon>Homo</taxon>
    </lineage>
</organism>
<feature type="signal peptide" evidence="3">
    <location>
        <begin position="1"/>
        <end position="23"/>
    </location>
</feature>
<feature type="chain" id="PRO_0000024298" description="Polycystin-1">
    <location>
        <begin position="24"/>
        <end position="4303"/>
    </location>
</feature>
<feature type="topological domain" description="Extracellular" evidence="48">
    <location>
        <begin position="24"/>
        <end position="3074"/>
    </location>
</feature>
<feature type="transmembrane region" description="Helical" evidence="48">
    <location>
        <begin position="3075"/>
        <end position="3095"/>
    </location>
</feature>
<feature type="topological domain" description="Cytoplasmic" evidence="48">
    <location>
        <begin position="3096"/>
        <end position="3277"/>
    </location>
</feature>
<feature type="transmembrane region" description="Helical" evidence="48">
    <location>
        <begin position="3278"/>
        <end position="3298"/>
    </location>
</feature>
<feature type="topological domain" description="Extracellular" evidence="48">
    <location>
        <begin position="3299"/>
        <end position="3323"/>
    </location>
</feature>
<feature type="transmembrane region" description="Helical" evidence="48">
    <location>
        <begin position="3324"/>
        <end position="3344"/>
    </location>
</feature>
<feature type="topological domain" description="Cytoplasmic" evidence="48">
    <location>
        <begin position="3345"/>
        <end position="3559"/>
    </location>
</feature>
<feature type="transmembrane region" description="Helical" evidence="48">
    <location>
        <begin position="3560"/>
        <end position="3580"/>
    </location>
</feature>
<feature type="topological domain" description="Extracellular" evidence="48">
    <location>
        <begin position="3581"/>
        <end position="3582"/>
    </location>
</feature>
<feature type="transmembrane region" description="Helical" evidence="48">
    <location>
        <begin position="3583"/>
        <end position="3603"/>
    </location>
</feature>
<feature type="topological domain" description="Cytoplasmic" evidence="48">
    <location>
        <begin position="3604"/>
        <end position="3665"/>
    </location>
</feature>
<feature type="transmembrane region" description="Helical" evidence="48">
    <location>
        <begin position="3666"/>
        <end position="3686"/>
    </location>
</feature>
<feature type="topological domain" description="Extracellular" evidence="48">
    <location>
        <begin position="3687"/>
        <end position="3901"/>
    </location>
</feature>
<feature type="transmembrane region" description="Helical" evidence="48">
    <location>
        <begin position="3902"/>
        <end position="3922"/>
    </location>
</feature>
<feature type="topological domain" description="Cytoplasmic" evidence="48">
    <location>
        <begin position="3923"/>
        <end position="3935"/>
    </location>
</feature>
<feature type="transmembrane region" description="Helical" evidence="48">
    <location>
        <begin position="3936"/>
        <end position="3956"/>
    </location>
</feature>
<feature type="topological domain" description="Extracellular" evidence="48">
    <location>
        <begin position="3957"/>
        <end position="3984"/>
    </location>
</feature>
<feature type="transmembrane region" description="Helical" evidence="48">
    <location>
        <begin position="3985"/>
        <end position="4005"/>
    </location>
</feature>
<feature type="topological domain" description="Cytoplasmic" evidence="48">
    <location>
        <begin position="4006"/>
        <end position="4027"/>
    </location>
</feature>
<feature type="transmembrane region" description="Helical" evidence="48">
    <location>
        <begin position="4028"/>
        <end position="4048"/>
    </location>
</feature>
<feature type="topological domain" description="Extracellular" evidence="48">
    <location>
        <begin position="4049"/>
        <end position="4090"/>
    </location>
</feature>
<feature type="transmembrane region" description="Helical" evidence="48">
    <location>
        <begin position="4091"/>
        <end position="4110"/>
    </location>
</feature>
<feature type="topological domain" description="Cytoplasmic" evidence="48">
    <location>
        <begin position="4111"/>
        <end position="4303"/>
    </location>
</feature>
<feature type="domain" description="LRRNT">
    <location>
        <begin position="24"/>
        <end position="67"/>
    </location>
</feature>
<feature type="repeat" description="LRR 1">
    <location>
        <begin position="68"/>
        <end position="91"/>
    </location>
</feature>
<feature type="repeat" description="LRR 2">
    <location>
        <begin position="92"/>
        <end position="113"/>
    </location>
</feature>
<feature type="domain" description="LRRCT">
    <location>
        <begin position="125"/>
        <end position="178"/>
    </location>
</feature>
<feature type="domain" description="WSC" evidence="9">
    <location>
        <begin position="177"/>
        <end position="271"/>
    </location>
</feature>
<feature type="domain" description="PKD 1" evidence="6">
    <location>
        <begin position="272"/>
        <end position="359"/>
    </location>
</feature>
<feature type="domain" description="C-type lectin" evidence="4">
    <location>
        <begin position="415"/>
        <end position="531"/>
    </location>
</feature>
<feature type="domain" description="LDL-receptor class A; atypical">
    <location>
        <begin position="638"/>
        <end position="671"/>
    </location>
</feature>
<feature type="domain" description="PKD 2" evidence="6">
    <location>
        <begin position="743"/>
        <end position="817"/>
    </location>
</feature>
<feature type="domain" description="PKD 3" evidence="6">
    <location>
        <begin position="855"/>
        <end position="928"/>
    </location>
</feature>
<feature type="domain" description="PKD 4" evidence="6">
    <location>
        <begin position="935"/>
        <end position="1020"/>
    </location>
</feature>
<feature type="domain" description="PKD 5" evidence="6">
    <location>
        <begin position="1023"/>
        <end position="1129"/>
    </location>
</feature>
<feature type="domain" description="PKD 6" evidence="6">
    <location>
        <begin position="1127"/>
        <end position="1215"/>
    </location>
</feature>
<feature type="domain" description="PKD 7" evidence="6">
    <location>
        <begin position="1213"/>
        <end position="1298"/>
    </location>
</feature>
<feature type="domain" description="PKD 8" evidence="6">
    <location>
        <begin position="1294"/>
        <end position="1383"/>
    </location>
</feature>
<feature type="domain" description="PKD 9" evidence="6">
    <location>
        <begin position="1382"/>
        <end position="1469"/>
    </location>
</feature>
<feature type="domain" description="PKD 10" evidence="6">
    <location>
        <begin position="1468"/>
        <end position="1551"/>
    </location>
</feature>
<feature type="domain" description="PKD 11" evidence="6">
    <location>
        <begin position="1550"/>
        <end position="1635"/>
    </location>
</feature>
<feature type="domain" description="PKD 12" evidence="6">
    <location>
        <begin position="1634"/>
        <end position="1721"/>
    </location>
</feature>
<feature type="domain" description="PKD 13" evidence="6">
    <location>
        <begin position="1719"/>
        <end position="1805"/>
    </location>
</feature>
<feature type="domain" description="PKD 14" evidence="6">
    <location>
        <begin position="1807"/>
        <end position="1890"/>
    </location>
</feature>
<feature type="domain" description="PKD 15" evidence="6">
    <location>
        <begin position="1889"/>
        <end position="1974"/>
    </location>
</feature>
<feature type="domain" description="PKD 16" evidence="6">
    <location>
        <begin position="1977"/>
        <end position="2057"/>
    </location>
</feature>
<feature type="domain" description="PKD 17" evidence="6">
    <location>
        <begin position="2060"/>
        <end position="2148"/>
    </location>
</feature>
<feature type="domain" description="REJ" evidence="8">
    <location>
        <begin position="2146"/>
        <end position="2833"/>
    </location>
</feature>
<feature type="domain" description="GAIN-B" evidence="5">
    <location>
        <begin position="2862"/>
        <end position="3063"/>
    </location>
</feature>
<feature type="domain" description="PLAT" evidence="7">
    <location>
        <begin position="3118"/>
        <end position="3233"/>
    </location>
</feature>
<feature type="region of interest" description="Disordered" evidence="10">
    <location>
        <begin position="616"/>
        <end position="635"/>
    </location>
</feature>
<feature type="region of interest" description="GPS" evidence="5">
    <location>
        <begin position="3015"/>
        <end position="3063"/>
    </location>
</feature>
<feature type="region of interest" description="Disordered" evidence="10">
    <location>
        <begin position="4160"/>
        <end position="4196"/>
    </location>
</feature>
<feature type="region of interest" description="Disordered" evidence="10">
    <location>
        <begin position="4243"/>
        <end position="4303"/>
    </location>
</feature>
<feature type="coiled-coil region" evidence="3">
    <location>
        <begin position="4220"/>
        <end position="4251"/>
    </location>
</feature>
<feature type="compositionally biased region" description="Polar residues" evidence="10">
    <location>
        <begin position="4185"/>
        <end position="4195"/>
    </location>
</feature>
<feature type="compositionally biased region" description="Low complexity" evidence="10">
    <location>
        <begin position="4253"/>
        <end position="4269"/>
    </location>
</feature>
<feature type="compositionally biased region" description="Basic residues" evidence="10">
    <location>
        <begin position="4292"/>
        <end position="4303"/>
    </location>
</feature>
<feature type="site" description="Cleavage; by autolysis" evidence="5 34 37">
    <location>
        <begin position="3048"/>
        <end position="3049"/>
    </location>
</feature>
<feature type="modified residue" description="Phosphoserine; by PRKX; in vitro" evidence="38">
    <location>
        <position position="4166"/>
    </location>
</feature>
<feature type="glycosylation site" description="N-linked (GlcNAc...) asparagine" evidence="3">
    <location>
        <position position="50"/>
    </location>
</feature>
<feature type="glycosylation site" description="N-linked (GlcNAc...) asparagine" evidence="3">
    <location>
        <position position="89"/>
    </location>
</feature>
<feature type="glycosylation site" description="N-linked (GlcNAc...) asparagine" evidence="3">
    <location>
        <position position="116"/>
    </location>
</feature>
<feature type="glycosylation site" description="N-linked (GlcNAc...) asparagine" evidence="3">
    <location>
        <position position="121"/>
    </location>
</feature>
<feature type="glycosylation site" description="N-linked (GlcNAc...) asparagine" evidence="3">
    <location>
        <position position="187"/>
    </location>
</feature>
<feature type="glycosylation site" description="N-linked (GlcNAc...) asparagine" evidence="3">
    <location>
        <position position="621"/>
    </location>
</feature>
<feature type="glycosylation site" description="N-linked (GlcNAc...) asparagine" evidence="3">
    <location>
        <position position="632"/>
    </location>
</feature>
<feature type="glycosylation site" description="N-linked (GlcNAc...) asparagine" evidence="3">
    <location>
        <position position="746"/>
    </location>
</feature>
<feature type="glycosylation site" description="N-linked (GlcNAc...) asparagine" evidence="3">
    <location>
        <position position="810"/>
    </location>
</feature>
<feature type="glycosylation site" description="N-linked (GlcNAc...) asparagine" evidence="3">
    <location>
        <position position="841"/>
    </location>
</feature>
<feature type="glycosylation site" description="N-linked (GlcNAc...) asparagine" evidence="3">
    <location>
        <position position="854"/>
    </location>
</feature>
<feature type="glycosylation site" description="N-linked (GlcNAc...) asparagine" evidence="3">
    <location>
        <position position="890"/>
    </location>
</feature>
<feature type="glycosylation site" description="N-linked (GlcNAc...) asparagine" evidence="3">
    <location>
        <position position="921"/>
    </location>
</feature>
<feature type="glycosylation site" description="N-linked (GlcNAc...) asparagine" evidence="3">
    <location>
        <position position="1004"/>
    </location>
</feature>
<feature type="glycosylation site" description="N-linked (GlcNAc...) asparagine" evidence="3">
    <location>
        <position position="1010"/>
    </location>
</feature>
<feature type="glycosylation site" description="N-linked (GlcNAc...) asparagine" evidence="3">
    <location>
        <position position="1034"/>
    </location>
</feature>
<feature type="glycosylation site" description="N-linked (GlcNAc...) asparagine" evidence="3">
    <location>
        <position position="1072"/>
    </location>
</feature>
<feature type="glycosylation site" description="N-linked (GlcNAc...) asparagine" evidence="3">
    <location>
        <position position="1113"/>
    </location>
</feature>
<feature type="glycosylation site" description="N-linked (GlcNAc...) asparagine" evidence="3">
    <location>
        <position position="1178"/>
    </location>
</feature>
<feature type="glycosylation site" description="N-linked (GlcNAc...) asparagine" evidence="3">
    <location>
        <position position="1194"/>
    </location>
</feature>
<feature type="glycosylation site" description="N-linked (GlcNAc...) asparagine" evidence="3">
    <location>
        <position position="1240"/>
    </location>
</feature>
<feature type="glycosylation site" description="N-linked (GlcNAc...) asparagine" evidence="3">
    <location>
        <position position="1269"/>
    </location>
</feature>
<feature type="glycosylation site" description="N-linked (GlcNAc...) asparagine" evidence="3">
    <location>
        <position position="1336"/>
    </location>
</feature>
<feature type="glycosylation site" description="N-linked (GlcNAc...) asparagine" evidence="3">
    <location>
        <position position="1348"/>
    </location>
</feature>
<feature type="glycosylation site" description="N-linked (GlcNAc...) asparagine" evidence="3">
    <location>
        <position position="1382"/>
    </location>
</feature>
<feature type="glycosylation site" description="N-linked (GlcNAc...) asparagine" evidence="3">
    <location>
        <position position="1450"/>
    </location>
</feature>
<feature type="glycosylation site" description="N-linked (GlcNAc...) asparagine" evidence="3">
    <location>
        <position position="1455"/>
    </location>
</feature>
<feature type="glycosylation site" description="N-linked (GlcNAc...) asparagine" evidence="3">
    <location>
        <position position="1474"/>
    </location>
</feature>
<feature type="glycosylation site" description="N-linked (GlcNAc...) asparagine" evidence="3">
    <location>
        <position position="1518"/>
    </location>
</feature>
<feature type="glycosylation site" description="N-linked (GlcNAc...) asparagine" evidence="3">
    <location>
        <position position="1541"/>
    </location>
</feature>
<feature type="glycosylation site" description="N-linked (GlcNAc...) asparagine" evidence="3">
    <location>
        <position position="1554"/>
    </location>
</feature>
<feature type="glycosylation site" description="N-linked (GlcNAc...) asparagine" evidence="3">
    <location>
        <position position="1563"/>
    </location>
</feature>
<feature type="glycosylation site" description="N-linked (GlcNAc...) asparagine" evidence="3">
    <location>
        <position position="1647"/>
    </location>
</feature>
<feature type="glycosylation site" description="N-linked (GlcNAc...) asparagine" evidence="3">
    <location>
        <position position="1661"/>
    </location>
</feature>
<feature type="glycosylation site" description="N-linked (GlcNAc...) asparagine" evidence="3">
    <location>
        <position position="1733"/>
    </location>
</feature>
<feature type="glycosylation site" description="N-linked (GlcNAc...) asparagine" evidence="3">
    <location>
        <position position="1791"/>
    </location>
</feature>
<feature type="glycosylation site" description="N-linked (GlcNAc...) asparagine" evidence="3">
    <location>
        <position position="1834"/>
    </location>
</feature>
<feature type="glycosylation site" description="N-linked (GlcNAc...) asparagine" evidence="3">
    <location>
        <position position="1867"/>
    </location>
</feature>
<feature type="glycosylation site" description="N-linked (GlcNAc...) asparagine" evidence="3">
    <location>
        <position position="1880"/>
    </location>
</feature>
<feature type="glycosylation site" description="N-linked (GlcNAc...) asparagine" evidence="3">
    <location>
        <position position="1991"/>
    </location>
</feature>
<feature type="glycosylation site" description="N-linked (GlcNAc...) asparagine" evidence="3">
    <location>
        <position position="2050"/>
    </location>
</feature>
<feature type="glycosylation site" description="N-linked (GlcNAc...) asparagine" evidence="3">
    <location>
        <position position="2074"/>
    </location>
</feature>
<feature type="glycosylation site" description="N-linked (GlcNAc...) asparagine" evidence="3">
    <location>
        <position position="2125"/>
    </location>
</feature>
<feature type="glycosylation site" description="N-linked (GlcNAc...) asparagine" evidence="3">
    <location>
        <position position="2248"/>
    </location>
</feature>
<feature type="glycosylation site" description="N-linked (GlcNAc...) asparagine" evidence="3">
    <location>
        <position position="2353"/>
    </location>
</feature>
<feature type="glycosylation site" description="N-linked (GlcNAc...) asparagine" evidence="3">
    <location>
        <position position="2395"/>
    </location>
</feature>
<feature type="glycosylation site" description="N-linked (GlcNAc...) asparagine" evidence="3">
    <location>
        <position position="2412"/>
    </location>
</feature>
<feature type="glycosylation site" description="N-linked (GlcNAc...) asparagine" evidence="3">
    <location>
        <position position="2567"/>
    </location>
</feature>
<feature type="glycosylation site" description="N-linked (GlcNAc...) asparagine" evidence="3">
    <location>
        <position position="2578"/>
    </location>
</feature>
<feature type="glycosylation site" description="N-linked (GlcNAc...) asparagine" evidence="3">
    <location>
        <position position="2645"/>
    </location>
</feature>
<feature type="glycosylation site" description="N-linked (GlcNAc...) asparagine" evidence="3">
    <location>
        <position position="2718"/>
    </location>
</feature>
<feature type="glycosylation site" description="N-linked (GlcNAc...) asparagine" evidence="3">
    <location>
        <position position="2754"/>
    </location>
</feature>
<feature type="glycosylation site" description="N-linked (GlcNAc...) asparagine" evidence="3">
    <location>
        <position position="2841"/>
    </location>
</feature>
<feature type="glycosylation site" description="N-linked (GlcNAc...) asparagine" evidence="3">
    <location>
        <position position="2878"/>
    </location>
</feature>
<feature type="glycosylation site" description="N-linked (GlcNAc...) asparagine" evidence="3">
    <location>
        <position position="2925"/>
    </location>
</feature>
<feature type="glycosylation site" description="N-linked (GlcNAc...) asparagine" evidence="3">
    <location>
        <position position="2956"/>
    </location>
</feature>
<feature type="glycosylation site" description="N-linked (GlcNAc...) asparagine" evidence="3">
    <location>
        <position position="2994"/>
    </location>
</feature>
<feature type="glycosylation site" description="N-linked (GlcNAc...) asparagine" evidence="3">
    <location>
        <position position="3738"/>
    </location>
</feature>
<feature type="glycosylation site" description="N-linked (GlcNAc...) asparagine" evidence="3">
    <location>
        <position position="3790"/>
    </location>
</feature>
<feature type="glycosylation site" description="N-linked (GlcNAc...) asparagine" evidence="3">
    <location>
        <position position="3845"/>
    </location>
</feature>
<feature type="disulfide bond" evidence="1">
    <location>
        <begin position="436"/>
        <end position="530"/>
    </location>
</feature>
<feature type="disulfide bond" evidence="1">
    <location>
        <begin position="508"/>
        <end position="522"/>
    </location>
</feature>
<feature type="disulfide bond" evidence="1">
    <location>
        <begin position="640"/>
        <end position="653"/>
    </location>
</feature>
<feature type="disulfide bond" evidence="1">
    <location>
        <begin position="647"/>
        <end position="665"/>
    </location>
</feature>
<feature type="disulfide bond" evidence="1">
    <location>
        <begin position="660"/>
        <end position="669"/>
    </location>
</feature>
<feature type="disulfide bond" evidence="5">
    <location>
        <begin position="3015"/>
        <end position="3043"/>
    </location>
</feature>
<feature type="splice variant" id="VSP_009677" description="In isoform 2." evidence="59">
    <original>GWHDAEDAGAP</original>
    <variation>A</variation>
    <location>
        <begin position="2497"/>
        <end position="2507"/>
    </location>
</feature>
<feature type="splice variant" id="VSP_009678" description="In isoform 2 and isoform 3." evidence="59">
    <location>
        <position position="3390"/>
    </location>
</feature>
<feature type="sequence variant" id="VAR_011030" description="In PKD1." evidence="22">
    <original>L</original>
    <variation>Q</variation>
    <location>
        <position position="13"/>
    </location>
</feature>
<feature type="sequence variant" id="VAR_058759" description="In dbSNP:rs560049593." evidence="36 39">
    <original>P</original>
    <variation>H</variation>
    <location>
        <position position="36"/>
    </location>
</feature>
<feature type="sequence variant" id="VAR_058760" description="In PKD1; uncertain significance; dbSNP:rs886038369." evidence="30 39">
    <original>P</original>
    <variation>L</variation>
    <location>
        <position position="61"/>
    </location>
</feature>
<feature type="sequence variant" id="VAR_011031" description="In PKD1." evidence="22">
    <original>S</original>
    <variation>F</variation>
    <location>
        <position position="75"/>
    </location>
</feature>
<feature type="sequence variant" id="VAR_058761" evidence="31">
    <original>L</original>
    <variation>M</variation>
    <location>
        <position position="87"/>
    </location>
</feature>
<feature type="sequence variant" id="VAR_012452" description="In dbSNP:rs958271752." evidence="24">
    <original>A</original>
    <variation>V</variation>
    <location>
        <position position="88"/>
    </location>
</feature>
<feature type="sequence variant" id="VAR_064380" description="In PKD1; dbSNP:rs2092684310." evidence="43">
    <original>D</original>
    <variation>G</variation>
    <location>
        <position position="97"/>
    </location>
</feature>
<feature type="sequence variant" id="VAR_058762" description="In PKD1; uncertain significance; nearly abolishes expression at the cell membrane; dbSNP:rs1567219544." evidence="39 46">
    <original>S</original>
    <variation>I</variation>
    <location>
        <position position="99"/>
    </location>
</feature>
<feature type="sequence variant" id="VAR_011032" description="In PKD1." evidence="22">
    <original>W</original>
    <variation>C</variation>
    <location>
        <position position="139"/>
    </location>
</feature>
<feature type="sequence variant" id="VAR_058763" description="In PKD1." evidence="35">
    <original>Q</original>
    <variation>R</variation>
    <location>
        <position position="164"/>
    </location>
</feature>
<feature type="sequence variant" id="VAR_058764" description="In PKD1." evidence="35">
    <original>C</original>
    <variation>G</variation>
    <location>
        <position position="210"/>
    </location>
</feature>
<feature type="sequence variant" id="VAR_010085" description="In PKD1; likely benign; dbSNP:rs199476099." evidence="13">
    <original>R</original>
    <variation>L</variation>
    <location>
        <position position="324"/>
    </location>
</feature>
<feature type="sequence variant" id="VAR_068024" description="In PKD1; dbSNP:rs1232180956." evidence="44">
    <original>Y</original>
    <variation>C</variation>
    <location>
        <position position="325"/>
    </location>
</feature>
<feature type="sequence variant" id="VAR_058765" description="In PKD1." evidence="29">
    <original>G</original>
    <variation>C</variation>
    <location>
        <position position="381"/>
    </location>
</feature>
<feature type="sequence variant" id="VAR_064381" description="In PKD1; uncertain significance; dbSNP:rs1555458892." evidence="43">
    <original>C</original>
    <variation>R</variation>
    <location>
        <position position="436"/>
    </location>
</feature>
<feature type="sequence variant" id="VAR_064382" description="In PKD1; uncertain significance." evidence="43">
    <original>A</original>
    <variation>P</variation>
    <location>
        <position position="442"/>
    </location>
</feature>
<feature type="sequence variant" id="VAR_058766" description="In PKD1; dbSNP:rs58598099." evidence="35">
    <original>C</original>
    <variation>R</variation>
    <location>
        <position position="508"/>
    </location>
</feature>
<feature type="sequence variant" id="VAR_058767" description="In dbSNP:rs149022148." evidence="30">
    <original>P</original>
    <variation>S</variation>
    <location>
        <position position="572"/>
    </location>
</feature>
<feature type="sequence variant" id="VAR_058768" description="In PKD1." evidence="39">
    <original>F</original>
    <variation>Y</variation>
    <location>
        <position position="594"/>
    </location>
</feature>
<feature type="sequence variant" id="VAR_068025" description="In PKD1; dbSNP:rs1555458413." evidence="44">
    <original>R</original>
    <variation>W</variation>
    <location>
        <position position="611"/>
    </location>
</feature>
<feature type="sequence variant" id="VAR_058769" description="In PKD1." evidence="35">
    <original>V</original>
    <variation>D</variation>
    <location>
        <position position="690"/>
    </location>
</feature>
<feature type="sequence variant" id="VAR_068026" description="In PKD1." evidence="44">
    <original>Y</original>
    <variation>D</variation>
    <location>
        <position position="698"/>
    </location>
</feature>
<feature type="sequence variant" id="VAR_064383" description="In PKD1; dbSNP:rs1616940." evidence="43 44">
    <original>L</original>
    <variation>P</variation>
    <location>
        <position position="727"/>
    </location>
</feature>
<feature type="sequence variant" id="VAR_064384" description="In PKD1; dbSNP:rs1616940." evidence="43">
    <original>L</original>
    <variation>R</variation>
    <location>
        <position position="727"/>
    </location>
</feature>
<feature type="sequence variant" id="VAR_058770">
    <original>P</original>
    <variation>R</variation>
    <location>
        <position position="738"/>
    </location>
</feature>
<feature type="sequence variant" id="VAR_058771" description="In dbSNP:rs40433." evidence="29 39 50">
    <original>R</original>
    <variation>Q</variation>
    <location>
        <position position="739"/>
    </location>
</feature>
<feature type="sequence variant" id="VAR_010086" description="In PKD1; dbSNP:rs199476100." evidence="13 36">
    <original>L</original>
    <variation>S</variation>
    <location>
        <position position="845"/>
    </location>
</feature>
<feature type="sequence variant" id="VAR_056696" description="In dbSNP:rs2369063.">
    <original>L</original>
    <variation>P</variation>
    <location>
        <position position="950"/>
    </location>
</feature>
<feature type="sequence variant" id="VAR_012453" description="In PKD1." evidence="24">
    <original>W</original>
    <variation>R</variation>
    <location>
        <position position="967"/>
    </location>
</feature>
<feature type="sequence variant" id="VAR_058772" description="In PKD1; dbSNP:rs1266492292." evidence="32">
    <original>Q</original>
    <variation>H</variation>
    <location>
        <position position="987"/>
    </location>
</feature>
<feature type="sequence variant" id="VAR_056697" description="In dbSNP:rs2549677." evidence="29 30 39 51">
    <original>M</original>
    <variation>T</variation>
    <location>
        <position position="1092"/>
    </location>
</feature>
<feature type="sequence variant" id="VAR_056698" description="In dbSNP:rs241573.">
    <original>L</original>
    <variation>R</variation>
    <location>
        <position position="1114"/>
    </location>
</feature>
<feature type="sequence variant" id="VAR_011033" description="In PKD1; uncertain significance; dbSNP:rs573566419." evidence="20">
    <original>G</original>
    <variation>S</variation>
    <location>
        <position position="1166"/>
    </location>
</feature>
<feature type="sequence variant" id="VAR_058773" description="In dbSNP:rs146887330." evidence="30">
    <original>P</original>
    <variation>S</variation>
    <location>
        <position position="1168"/>
    </location>
</feature>
<feature type="sequence variant" id="VAR_068027" description="In PKD1." evidence="44">
    <original>V</original>
    <variation>G</variation>
    <location>
        <position position="1206"/>
    </location>
</feature>
<feature type="sequence variant" id="VAR_058774" description="In PKD1." evidence="35">
    <location>
        <position position="1240"/>
    </location>
</feature>
<feature type="sequence variant" id="VAR_058775" description="In PKD1; uncertain significance; dbSNP:rs1033550407." evidence="39">
    <original>T</original>
    <variation>M</variation>
    <location>
        <position position="1242"/>
    </location>
</feature>
<feature type="sequence variant" id="VAR_058776" description="In PKD1; likely benign; dbSNP:rs143690392." evidence="30">
    <original>R</original>
    <variation>W</variation>
    <location>
        <position position="1340"/>
    </location>
</feature>
<feature type="sequence variant" id="VAR_010087" description="In dbSNP:rs116092985." evidence="13 14 29 30 32 39">
    <original>W</original>
    <variation>R</variation>
    <location>
        <position position="1399"/>
    </location>
</feature>
<feature type="sequence variant" id="VAR_058777" description="In dbSNP:rs148164067." evidence="39">
    <original>A</original>
    <variation>T</variation>
    <location>
        <position position="1516"/>
    </location>
</feature>
<feature type="sequence variant" id="VAR_056699" description="In dbSNP:rs241572.">
    <original>R</original>
    <variation>P</variation>
    <location>
        <position position="1557"/>
    </location>
</feature>
<feature type="sequence variant" id="VAR_058778" description="In dbSNP:rs761106434." evidence="29">
    <original>T</original>
    <variation>M</variation>
    <location>
        <position position="1649"/>
    </location>
</feature>
<feature type="sequence variant" id="VAR_058779" description="In PKD1." evidence="35">
    <original>T</original>
    <variation>P</variation>
    <location>
        <position position="1667"/>
    </location>
</feature>
<feature type="sequence variant" id="VAR_058780" description="In dbSNP:rs139520275." evidence="30">
    <original>S</original>
    <variation>L</variation>
    <location>
        <position position="1684"/>
    </location>
</feature>
<feature type="sequence variant" id="VAR_056700" description="In dbSNP:rs241571.">
    <original>T</original>
    <variation>K</variation>
    <location>
        <position position="1734"/>
    </location>
</feature>
<feature type="sequence variant" id="VAR_010088" description="In dbSNP:rs151176070." evidence="13">
    <original>P</original>
    <variation>L</variation>
    <location>
        <position position="1786"/>
    </location>
</feature>
<feature type="sequence variant" id="VAR_058781" description="In PKD1; dbSNP:rs778028644." evidence="30 35">
    <original>E</original>
    <variation>K</variation>
    <location>
        <position position="1811"/>
    </location>
</feature>
<feature type="sequence variant" id="VAR_058782" description="In dbSNP:rs144137200." evidence="39">
    <original>A</original>
    <variation>T</variation>
    <location>
        <position position="1871"/>
    </location>
</feature>
<feature type="sequence variant" id="VAR_058783" description="In dbSNP:rs754890213." evidence="39">
    <original>A</original>
    <variation>V</variation>
    <location>
        <position position="1926"/>
    </location>
</feature>
<feature type="sequence variant" id="VAR_058784" description="In dbSNP:rs137978188." evidence="30">
    <original>V</original>
    <variation>I</variation>
    <location>
        <position position="1943"/>
    </location>
</feature>
<feature type="sequence variant" id="VAR_058785" description="In dbSNP:rs2092441433." evidence="39">
    <original>G</original>
    <variation>D</variation>
    <location>
        <position position="1952"/>
    </location>
</feature>
<feature type="sequence variant" id="VAR_011034" description="In PKD1." evidence="20">
    <original>V</original>
    <variation>E</variation>
    <location>
        <position position="1956"/>
    </location>
</feature>
<feature type="sequence variant" id="VAR_011035" description="In PKD1." evidence="22">
    <original>FT</original>
    <variation>L</variation>
    <location>
        <begin position="1992"/>
        <end position="1993"/>
    </location>
</feature>
<feature type="sequence variant" id="VAR_011036" description="In dbSNP:rs752388015." evidence="20">
    <original>R</original>
    <variation>H</variation>
    <location>
        <position position="1995"/>
    </location>
</feature>
<feature type="sequence variant" id="VAR_058786" description="In PKD1; dbSNP:rs1383930225." evidence="31">
    <original>T</original>
    <variation>I</variation>
    <location>
        <position position="2083"/>
    </location>
</feature>
<feature type="sequence variant" id="VAR_058787" description="In PKD1." evidence="30 35">
    <original>Y</original>
    <variation>C</variation>
    <location>
        <position position="2092"/>
    </location>
</feature>
<feature type="sequence variant" id="VAR_058788" description="In PKD1." evidence="29">
    <original>Y</original>
    <variation>D</variation>
    <location>
        <position position="2185"/>
    </location>
</feature>
<feature type="sequence variant" id="VAR_058789" description="In PKD1; likely benign; dbSNP:rs140869992." evidence="35 39">
    <original>R</original>
    <variation>C</variation>
    <location>
        <position position="2200"/>
    </location>
</feature>
<feature type="sequence variant" id="VAR_011037" description="In PKD1." evidence="22">
    <location>
        <begin position="2220"/>
        <end position="2224"/>
    </location>
</feature>
<feature type="sequence variant" id="VAR_011038" description="In PKD1; uncertain significance; dbSNP:rs139971481." evidence="17">
    <original>T</original>
    <variation>M</variation>
    <location>
        <position position="2250"/>
    </location>
</feature>
<feature type="sequence variant" id="VAR_058790" description="In PKD1." evidence="30 35">
    <location>
        <position position="2260"/>
    </location>
</feature>
<feature type="sequence variant" id="VAR_011039" description="In PKD1; uncertain significance; dbSNP:rs200433577." evidence="17">
    <original>R</original>
    <variation>W</variation>
    <location>
        <position position="2329"/>
    </location>
</feature>
<feature type="sequence variant" id="VAR_011040" description="In PKD1." evidence="22">
    <original>Y</original>
    <variation>D</variation>
    <location>
        <position position="2336"/>
    </location>
</feature>
<feature type="sequence variant" id="VAR_058791" description="In PKD1; dbSNP:rs1567187445." evidence="35">
    <original>C</original>
    <variation>R</variation>
    <location>
        <position position="2370"/>
    </location>
</feature>
<feature type="sequence variant" id="VAR_058792" description="In PKD1." evidence="35">
    <original>C</original>
    <variation>Y</variation>
    <location>
        <position position="2373"/>
    </location>
</feature>
<feature type="sequence variant" id="VAR_011041" description="In PKD1." evidence="17 44">
    <original>Y</original>
    <variation>C</variation>
    <location>
        <position position="2379"/>
    </location>
</feature>
<feature type="sequence variant" id="VAR_064385" description="In PKD1." evidence="43">
    <original>G</original>
    <variation>D</variation>
    <location>
        <position position="2391"/>
    </location>
</feature>
<feature type="sequence variant" id="VAR_012454" description="In PKD1." evidence="14">
    <original>R</original>
    <variation>P</variation>
    <location>
        <position position="2392"/>
    </location>
</feature>
<feature type="sequence variant" id="VAR_011042" description="In PKD1; uncertain significance; dbSNP:rs538769374." evidence="20">
    <original>R</original>
    <variation>C</variation>
    <location>
        <position position="2408"/>
    </location>
</feature>
<feature type="sequence variant" id="VAR_058793" description="In PKD1." evidence="29">
    <location>
        <position position="2421"/>
    </location>
</feature>
<feature type="sequence variant" id="VAR_058794" description="In PKD1; uncertain significance; dbSNP:rs1555453210." evidence="39">
    <original>T</original>
    <variation>K</variation>
    <location>
        <position position="2422"/>
    </location>
</feature>
<feature type="sequence variant" id="VAR_012455" description="In PKD1; dbSNP:rs1555453207." evidence="14">
    <original>S</original>
    <variation>F</variation>
    <location>
        <position position="2423"/>
    </location>
</feature>
<feature type="sequence variant" id="VAR_064386" description="In PKD1; dbSNP:rs151257298." evidence="43">
    <original>R</original>
    <variation>W</variation>
    <location>
        <position position="2434"/>
    </location>
</feature>
<feature type="sequence variant" id="VAR_011043" description="In PKD1." evidence="20">
    <original>G</original>
    <variation>GG</variation>
    <location>
        <position position="2443"/>
    </location>
</feature>
<feature type="sequence variant" id="VAR_012456" description="In PKD1; dbSNP:rs1161298621." evidence="26">
    <original>P</original>
    <variation>L</variation>
    <location>
        <position position="2471"/>
    </location>
</feature>
<feature type="sequence variant" id="VAR_056701" description="In dbSNP:rs2432404.">
    <original>R</original>
    <variation>Q</variation>
    <location>
        <position position="2515"/>
    </location>
</feature>
<feature type="sequence variant" id="VAR_012457" description="In PKD1; uncertain significance." evidence="26">
    <original>Q</original>
    <variation>L</variation>
    <location>
        <position position="2519"/>
    </location>
</feature>
<feature type="sequence variant" id="VAR_056702" description="In dbSNP:rs3874655.">
    <original>S</original>
    <variation>G</variation>
    <location>
        <position position="2534"/>
    </location>
</feature>
<feature type="sequence variant" id="VAR_064387" description="In PKD1; likely benign; dbSNP:rs200037070." evidence="43">
    <original>H</original>
    <variation>Y</variation>
    <location>
        <position position="2546"/>
    </location>
</feature>
<feature type="sequence variant" id="VAR_012458" description="In dbSNP:rs28369051." evidence="14">
    <original>E</original>
    <variation>Q</variation>
    <location>
        <position position="2548"/>
    </location>
</feature>
<feature type="sequence variant" id="VAR_064388" description="In PKD1; uncertain significance; dbSNP:rs758896945." evidence="43">
    <original>S</original>
    <variation>C</variation>
    <location>
        <position position="2569"/>
    </location>
</feature>
<feature type="sequence variant" id="VAR_012459" description="In PKD1; uncertain significance; dbSNP:rs748240352." evidence="26">
    <location>
        <position position="2579"/>
    </location>
</feature>
<feature type="sequence variant" id="VAR_012460" description="In dbSNP:rs2432405." evidence="26">
    <original>T</original>
    <variation>M</variation>
    <location>
        <position position="2582"/>
    </location>
</feature>
<feature type="sequence variant" id="VAR_011044" description="In dbSNP:rs778565182." evidence="20">
    <original>D</original>
    <variation>N</variation>
    <location>
        <position position="2604"/>
    </location>
</feature>
<feature type="sequence variant" id="VAR_012461" description="In PKD1; uncertain significance." evidence="26">
    <location>
        <position position="2613"/>
    </location>
</feature>
<feature type="sequence variant" id="VAR_012462" description="In PKD1; benign; dbSNP:rs9936785." evidence="14 26 29 30 36 39">
    <original>H</original>
    <variation>R</variation>
    <location>
        <position position="2638"/>
    </location>
</feature>
<feature type="sequence variant" id="VAR_064389" description="In PKD1; uncertain significance; dbSNP:rs374500158." evidence="43">
    <original>I</original>
    <variation>T</variation>
    <location>
        <position position="2646"/>
    </location>
</feature>
<feature type="sequence variant" id="VAR_012463" description="In PKD1; uncertain significance; dbSNP:rs1490043027." evidence="26">
    <original>T</original>
    <variation>I</variation>
    <location>
        <position position="2649"/>
    </location>
</feature>
<feature type="sequence variant" id="VAR_011045" description="In dbSNP:rs144557371." evidence="22 30">
    <original>P</original>
    <variation>S</variation>
    <location>
        <position position="2674"/>
    </location>
</feature>
<feature type="sequence variant" id="VAR_012464" description="In PKD1; likely benign; dbSNP:rs201238819." evidence="24">
    <original>L</original>
    <variation>R</variation>
    <location>
        <position position="2696"/>
    </location>
</feature>
<feature type="sequence variant" id="VAR_011046" description="In dbSNP:rs147350387." evidence="22 30 39">
    <original>T</original>
    <variation>M</variation>
    <location>
        <position position="2708"/>
    </location>
</feature>
<feature type="sequence variant" id="VAR_011047" description="In dbSNP:rs150568356." evidence="22">
    <original>P</original>
    <variation>T</variation>
    <location>
        <position position="2734"/>
    </location>
</feature>
<feature type="sequence variant" id="VAR_011048" description="In dbSNP:rs141717814." evidence="22">
    <original>Q</original>
    <variation>L</variation>
    <location>
        <position position="2735"/>
    </location>
</feature>
<feature type="sequence variant" id="VAR_014918" description="In dbSNP:rs1800569.">
    <original>R</original>
    <variation>P</variation>
    <location>
        <position position="2746"/>
    </location>
</feature>
<feature type="sequence variant" id="VAR_011049" description="In PKD1." evidence="22">
    <original>A</original>
    <variation>D</variation>
    <location>
        <position position="2752"/>
    </location>
</feature>
<feature type="sequence variant" id="VAR_005533" description="In PKD1; associated in cis with P-2761 and T-2764; dbSNP:rs879809222." evidence="56">
    <original>M</original>
    <variation>T</variation>
    <location>
        <position position="2760"/>
    </location>
</feature>
<feature type="sequence variant" id="VAR_058795" description="In PKD1; associated in cis with T-2760 and T-2764; dbSNP:rs145629362." evidence="56">
    <original>R</original>
    <variation>P</variation>
    <location>
        <position position="2761"/>
    </location>
</feature>
<feature type="sequence variant" id="VAR_005535" description="In PKD1; uncertain significance." evidence="56">
    <original>L</original>
    <variation>V</variation>
    <location>
        <position position="2763"/>
    </location>
</feature>
<feature type="sequence variant" id="VAR_005536" description="In PKD1; associated in cis with T-2760 and P-2761; dbSNP:rs1596527405." evidence="56">
    <original>M</original>
    <variation>T</variation>
    <location>
        <position position="2764"/>
    </location>
</feature>
<feature type="sequence variant" id="VAR_011051" description="In dbSNP:rs144979397." evidence="22 29">
    <original>R</original>
    <variation>C</variation>
    <location>
        <position position="2765"/>
    </location>
</feature>
<feature type="sequence variant" id="VAR_011050" description="In PKD1.">
    <original>R</original>
    <variation>RILMR</variation>
    <location>
        <position position="2765"/>
    </location>
</feature>
<feature type="sequence variant" id="VAR_068028" description="In PKD1; dbSNP:rs2092203712." evidence="44">
    <original>R</original>
    <variation>C</variation>
    <location>
        <position position="2767"/>
    </location>
</feature>
<feature type="sequence variant" id="VAR_011052" description="In PKD1; associated in cis with S-2858; dbSNP:rs1456510041." evidence="22">
    <original>V</original>
    <variation>M</variation>
    <location>
        <position position="2768"/>
    </location>
</feature>
<feature type="sequence variant" id="VAR_011053" description="In PKD1; does not undergo autoproteolytic cleavage; dbSNP:rs1057518897." evidence="22 34 35 44">
    <original>E</original>
    <variation>K</variation>
    <location>
        <position position="2771"/>
    </location>
</feature>
<feature type="sequence variant" id="VAR_011054" description="In dbSNP:rs151089809." evidence="22">
    <original>V</original>
    <variation>M</variation>
    <location>
        <position position="2782"/>
    </location>
</feature>
<feature type="sequence variant" id="VAR_058796" description="In PKD1." evidence="29">
    <original>G</original>
    <variation>D</variation>
    <location>
        <position position="2785"/>
    </location>
</feature>
<feature type="sequence variant" id="VAR_005537" description="In PKD1; likely benign; does not affect autoproteolytic cleavage at the GPS region of the GAIN-B domain; dbSNP:rs367746233." evidence="34 56">
    <original>R</original>
    <variation>Q</variation>
    <location>
        <position position="2791"/>
    </location>
</feature>
<feature type="sequence variant" id="VAR_058797" description="In PKD1; uncertain significance; dbSNP:rs534112936." evidence="35">
    <original>P</original>
    <variation>L</variation>
    <location>
        <position position="2802"/>
    </location>
</feature>
<feature type="sequence variant" id="VAR_011055" description="In PKD1; likely benign; dbSNP:rs149151043." evidence="22 30 31 39">
    <original>G</original>
    <variation>R</variation>
    <location>
        <position position="2814"/>
    </location>
</feature>
<feature type="sequence variant" id="VAR_011056" description="In PKD1; dbSNP:rs1567177684." evidence="22 31">
    <original>L</original>
    <variation>P</variation>
    <location>
        <position position="2816"/>
    </location>
</feature>
<feature type="sequence variant" id="VAR_005538" description="In PKD1; uncertain significance; dbSNP:rs2092195883." evidence="56">
    <original>I</original>
    <variation>T</variation>
    <location>
        <position position="2826"/>
    </location>
</feature>
<feature type="sequence variant" id="VAR_011057" description="In PKD1; associated in cis with M-2768; dbSNP:rs755522953." evidence="22">
    <original>G</original>
    <variation>S</variation>
    <location>
        <position position="2858"/>
    </location>
</feature>
<feature type="sequence variant" id="VAR_011058" description="In dbSNP:rs756700082." evidence="22">
    <original>R</original>
    <variation>G</variation>
    <location>
        <position position="2888"/>
    </location>
</feature>
<feature type="sequence variant" id="VAR_064390" description="In PKD1; dbSNP:rs752447240." evidence="43">
    <original>S</original>
    <variation>R</variation>
    <location>
        <position position="2889"/>
    </location>
</feature>
<feature type="sequence variant" id="VAR_011059" description="In dbSNP:rs147788838." evidence="22">
    <original>V</original>
    <variation>I</variation>
    <location>
        <position position="2905"/>
    </location>
</feature>
<feature type="sequence variant" id="VAR_011060" description="In PKD1; does not undergo autoproteolytic cleavage." evidence="18 34">
    <original>H</original>
    <variation>P</variation>
    <location>
        <position position="2921"/>
    </location>
</feature>
<feature type="sequence variant" id="VAR_058798" description="In dbSNP:rs750780241." evidence="30">
    <original>S</original>
    <variation>L</variation>
    <location>
        <position position="2958"/>
    </location>
</feature>
<feature type="sequence variant" id="VAR_011061" description="In dbSNP:rs13337123." evidence="22">
    <original>E</original>
    <variation>D</variation>
    <location>
        <position position="2966"/>
    </location>
</feature>
<feature type="sequence variant" id="VAR_012465" description="In dbSNP:rs150189496." evidence="26">
    <original>D</original>
    <variation>N</variation>
    <location>
        <position position="2972"/>
    </location>
</feature>
<feature type="sequence variant" id="VAR_058799" evidence="30">
    <original>T</original>
    <variation>N</variation>
    <location>
        <position position="2977"/>
    </location>
</feature>
<feature type="sequence variant" id="VAR_012466" description="In PKD1; uncertain significance." evidence="26">
    <location>
        <position position="2978"/>
    </location>
</feature>
<feature type="sequence variant" id="VAR_012467" description="In PKD1; dbSNP:rs373952574." evidence="24">
    <original>R</original>
    <variation>G</variation>
    <location>
        <position position="2985"/>
    </location>
</feature>
<feature type="sequence variant" id="VAR_010089" description="In PKD1; does not undergo autoproteolytic cleavage; dbSNP:rs1555450487." evidence="34 54">
    <original>L</original>
    <variation>P</variation>
    <location>
        <position position="2993"/>
    </location>
</feature>
<feature type="sequence variant" id="VAR_068029" description="In PKD1." evidence="44">
    <original>L</original>
    <variation>R</variation>
    <location>
        <position position="2995"/>
    </location>
</feature>
<feature type="sequence variant" id="VAR_056703" description="In dbSNP:rs1063401.">
    <original>Q</original>
    <variation>E</variation>
    <location>
        <position position="3005"/>
    </location>
</feature>
<feature type="sequence variant" id="VAR_005539" description="In PKD1; uncertain significance; dbSNP:rs117896488." evidence="56">
    <original>V</original>
    <variation>L</variation>
    <location>
        <position position="3008"/>
    </location>
</feature>
<feature type="sequence variant" id="VAR_058800" description="In dbSNP:rs117896488." evidence="25">
    <original>V</original>
    <variation>M</variation>
    <location>
        <position position="3008"/>
    </location>
</feature>
<feature type="sequence variant" id="VAR_011062" description="In PKD1." evidence="22">
    <location>
        <begin position="3012"/>
        <end position="3017"/>
    </location>
</feature>
<feature type="sequence variant" id="VAR_010090" description="In PKD1; does not undergo autoproteolytic cleavage; dbSNP:rs2151750082." evidence="34 54">
    <original>Q</original>
    <variation>R</variation>
    <location>
        <position position="3016"/>
    </location>
</feature>
<feature type="sequence variant" id="VAR_056704" description="In dbSNP:rs17135779.">
    <original>M</original>
    <variation>V</variation>
    <location>
        <position position="3023"/>
    </location>
</feature>
<feature type="sequence variant" id="VAR_058801" description="In PKD1." evidence="29">
    <location>
        <begin position="3027"/>
        <end position="3039"/>
    </location>
</feature>
<feature type="sequence variant" id="VAR_012468" description="In PKD1; dbSNP:rs200522524." evidence="24">
    <original>R</original>
    <variation>C</variation>
    <location>
        <position position="3039"/>
    </location>
</feature>
<feature type="sequence variant" id="VAR_058802" description="In dbSNP:rs778055216." evidence="30">
    <original>V</original>
    <variation>M</variation>
    <location>
        <position position="3057"/>
    </location>
</feature>
<feature type="sequence variant" id="VAR_011063" description="In dbSNP:rs9925969." evidence="17 18 22 26 29 36 39 56">
    <original>F</original>
    <variation>L</variation>
    <location>
        <position position="3066"/>
    </location>
</feature>
<feature type="sequence variant" id="VAR_058803" description="In PKD1; uncertain significance; dbSNP:rs1358566538." evidence="36">
    <original>V</original>
    <variation>M</variation>
    <location>
        <position position="3138"/>
    </location>
</feature>
<feature type="sequence variant" id="VAR_011064" evidence="17">
    <original>G</original>
    <variation>V</variation>
    <location>
        <position position="3139"/>
    </location>
</feature>
<feature type="sequence variant" id="VAR_064391" description="In PKD1." evidence="43">
    <original>L</original>
    <variation>P</variation>
    <location>
        <position position="3154"/>
    </location>
</feature>
<feature type="sequence variant" id="VAR_058804" description="In PKD1; likely benign; dbSNP:rs139945204." evidence="30">
    <original>I</original>
    <variation>F</variation>
    <location>
        <position position="3167"/>
    </location>
</feature>
<feature type="sequence variant" id="VAR_058805" description="In PKD1." evidence="35">
    <location>
        <position position="3188"/>
    </location>
</feature>
<feature type="sequence variant" id="VAR_011065" evidence="17">
    <original>P</original>
    <variation>L</variation>
    <location>
        <position position="3193"/>
    </location>
</feature>
<feature type="sequence variant" id="VAR_013838" description="In PKD1; uncertain significance; dbSNP:rs140791671." evidence="23">
    <original>R</original>
    <variation>H</variation>
    <location>
        <position position="3247"/>
    </location>
</feature>
<feature type="sequence variant" id="VAR_012469" description="In PKD1; uncertain significance; dbSNP:rs201780393." evidence="24">
    <original>V</original>
    <variation>I</variation>
    <location>
        <position position="3285"/>
    </location>
</feature>
<feature type="sequence variant" id="VAR_012470" description="In dbSNP:rs1242837732." evidence="24">
    <original>H</original>
    <variation>R</variation>
    <location>
        <position position="3311"/>
    </location>
</feature>
<feature type="sequence variant" id="VAR_058806" description="In PKD1; uncertain significance; dbSNP:rs781263445." evidence="35">
    <original>P</original>
    <variation>L</variation>
    <location>
        <position position="3355"/>
    </location>
</feature>
<feature type="sequence variant" id="VAR_005541" description="In PKD1; uncertain significance; dbSNP:rs371283948." evidence="18 58">
    <original>V</original>
    <variation>M</variation>
    <location>
        <position position="3375"/>
    </location>
</feature>
<feature type="sequence variant" id="VAR_013839" description="In PKD1; uncertain significance; dbSNP:rs776463508." evidence="23">
    <original>T</original>
    <variation>M</variation>
    <location>
        <position position="3382"/>
    </location>
</feature>
<feature type="sequence variant" id="VAR_058807" description="In dbSNP:rs140189010." evidence="30">
    <original>R</original>
    <variation>Q</variation>
    <location>
        <position position="3435"/>
    </location>
</feature>
<feature type="sequence variant" id="VAR_010091" description="In dbSNP:rs45478794." evidence="25 27 31 36 54">
    <original>T</original>
    <variation>M</variation>
    <location>
        <position position="3510"/>
    </location>
</feature>
<feature type="sequence variant" id="VAR_010092" description="In PKD1; uncertain significance; dbSNP:rs141946034." evidence="54">
    <original>L</original>
    <variation>V</variation>
    <location>
        <position position="3511"/>
    </location>
</feature>
<feature type="sequence variant" id="VAR_011066" description="In dbSNP:rs34197769." evidence="30 36 39">
    <original>A</original>
    <variation>V</variation>
    <location>
        <position position="3512"/>
    </location>
</feature>
<feature type="sequence variant" id="VAR_012471" description="In PKD1; likely benign; dbSNP:rs79000340." evidence="27">
    <original>G</original>
    <variation>R</variation>
    <location>
        <position position="3560"/>
    </location>
</feature>
<feature type="sequence variant" id="VAR_010093">
    <original>S</original>
    <variation>N</variation>
    <location>
        <position position="3562"/>
    </location>
</feature>
<feature type="sequence variant" id="VAR_058808" description="In PKD1; uncertain significance; dbSNP:rs781492044." evidence="33">
    <original>G</original>
    <variation>S</variation>
    <location>
        <position position="3602"/>
    </location>
</feature>
<feature type="sequence variant" id="VAR_064392" description="In PKD1." evidence="43">
    <original>W</original>
    <variation>R</variation>
    <location>
        <position position="3603"/>
    </location>
</feature>
<feature type="sequence variant" id="VAR_005542" description="In PKD1; uncertain significance; dbSNP:rs1416373452." evidence="28 52">
    <original>E</original>
    <variation>D</variation>
    <location>
        <position position="3632"/>
    </location>
</feature>
<feature type="sequence variant" id="VAR_058809" description="In PKD1." evidence="28">
    <original>P</original>
    <variation>L</variation>
    <location>
        <position position="3649"/>
    </location>
</feature>
<feature type="sequence variant" id="VAR_068030" description="In PKD1; dbSNP:rs2091705970." evidence="44">
    <original>G</original>
    <variation>S</variation>
    <location>
        <position position="3651"/>
    </location>
</feature>
<feature type="sequence variant" id="VAR_005543" description="In PKD1." evidence="28 55">
    <original>M</original>
    <variation>T</variation>
    <location>
        <position position="3678"/>
    </location>
</feature>
<feature type="sequence variant" id="VAR_058810" description="In PKD1." evidence="35">
    <original>L</original>
    <variation>P</variation>
    <location>
        <position position="3682"/>
    </location>
</feature>
<feature type="sequence variant" id="VAR_011067" description="In PKD1; dbSNP:rs1555446576." evidence="21 27">
    <original>R</original>
    <variation>Q</variation>
    <location>
        <position position="3719"/>
    </location>
</feature>
<feature type="sequence variant" id="VAR_058811" description="In PKD1; uncertain significance." evidence="39">
    <original>W</original>
    <variation>S</variation>
    <location>
        <position position="3726"/>
    </location>
</feature>
<feature type="sequence variant" id="VAR_005544" description="In PKD1." evidence="15 52">
    <location>
        <begin position="3748"/>
        <end position="3752"/>
    </location>
</feature>
<feature type="sequence variant" id="VAR_064393" description="In PKD1; dbSNP:rs1327414405." evidence="43 44">
    <original>R</original>
    <variation>Q</variation>
    <location>
        <position position="3750"/>
    </location>
</feature>
<feature type="sequence variant" id="VAR_058812" description="In PKD1." evidence="35">
    <original>Q</original>
    <variation>R</variation>
    <location>
        <position position="3751"/>
    </location>
</feature>
<feature type="sequence variant" id="VAR_011068" description="In PKD1; dbSNP:rs1167476946." evidence="16 27 44">
    <original>R</original>
    <variation>W</variation>
    <location>
        <position position="3753"/>
    </location>
</feature>
<feature type="sequence variant" id="VAR_011069" description="In PKD1." evidence="16">
    <original>D</original>
    <variation>N</variation>
    <location>
        <position position="3815"/>
    </location>
</feature>
<feature type="sequence variant" id="VAR_011070" description="In PKD1; dbSNP:rs2151695909." evidence="21 30">
    <original>L</original>
    <variation>P</variation>
    <location>
        <position position="3852"/>
    </location>
</feature>
<feature type="sequence variant" id="VAR_058813" description="In PKD1; uncertain significance." evidence="36">
    <original>A</original>
    <variation>P</variation>
    <location>
        <position position="3954"/>
    </location>
</feature>
<feature type="sequence variant" id="VAR_010094" description="In PKD1.">
    <original>F</original>
    <variation>FLLF</variation>
    <location>
        <position position="3996"/>
    </location>
</feature>
<feature type="sequence variant" id="VAR_005545" description="In PKD1; dbSNP:rs142768096." evidence="57">
    <original>G</original>
    <variation>D</variation>
    <location>
        <position position="4032"/>
    </location>
</feature>
<feature type="sequence variant" id="VAR_005546" description="In dbSNP:rs10960." evidence="15 21 28 30 32 36 39 57">
    <original>I</original>
    <variation>V</variation>
    <location>
        <position position="4045"/>
    </location>
</feature>
<feature type="sequence variant" id="VAR_005547" evidence="53">
    <original>V</original>
    <variation>A</variation>
    <location>
        <position position="4058"/>
    </location>
</feature>
<feature type="sequence variant" id="VAR_010095" description="In dbSNP:rs3209986." evidence="28 30 36 39">
    <original>A</original>
    <variation>V</variation>
    <location>
        <position position="4059"/>
    </location>
</feature>
<feature type="sequence variant" id="VAR_058814" description="In dbSNP:rs1306483854." evidence="28">
    <original>G</original>
    <variation>E</variation>
    <location>
        <position position="4102"/>
    </location>
</feature>
<feature type="sequence variant" id="VAR_058815" evidence="28">
    <original>L</original>
    <variation>P</variation>
    <location>
        <position position="4106"/>
    </location>
</feature>
<feature type="sequence variant" id="VAR_058816" description="In dbSNP:rs1309138642." evidence="30">
    <original>P</original>
    <variation>S</variation>
    <location>
        <position position="4124"/>
    </location>
</feature>
<feature type="sequence variant" id="VAR_011071" description="In PKD1." evidence="15">
    <location>
        <position position="4132"/>
    </location>
</feature>
<feature type="sequence variant" id="VAR_010096" description="In PKD1." evidence="19">
    <original>R</original>
    <variation>G</variation>
    <location>
        <position position="4136"/>
    </location>
</feature>
<feature type="sequence variant" id="VAR_058817" description="In dbSNP:rs148478410." evidence="28 30">
    <original>V</original>
    <variation>I</variation>
    <location>
        <position position="4146"/>
    </location>
</feature>
<feature type="sequence variant" id="VAR_068031" description="In PKD1; dbSNP:rs1282668884." evidence="44">
    <original>R</original>
    <variation>C</variation>
    <location>
        <position position="4150"/>
    </location>
</feature>
<feature type="sequence variant" id="VAR_010097" description="In PKD1; dbSNP:rs115538130." evidence="19">
    <original>R</original>
    <variation>C</variation>
    <location>
        <position position="4154"/>
    </location>
</feature>
<feature type="sequence variant" id="VAR_058818" description="In PKD1." evidence="39">
    <original>F</original>
    <variation>V</variation>
    <location>
        <position position="4155"/>
    </location>
</feature>
<feature type="sequence variant" id="VAR_010098" description="In dbSNP:rs547854563." evidence="30 54">
    <original>S</original>
    <variation>F</variation>
    <location>
        <position position="4190"/>
    </location>
</feature>
<feature type="sequence variant" id="VAR_010099" description="In PKD1." evidence="11">
    <original>Q</original>
    <variation>P</variation>
    <location>
        <position position="4225"/>
    </location>
</feature>
<feature type="sequence variant" id="VAR_058819" description="In PKD1." evidence="33">
    <original>P</original>
    <variation>S</variation>
    <location>
        <position position="4255"/>
    </location>
</feature>
<feature type="sequence variant" id="VAR_010100" description="In PKD1; likely benign; dbSNP:rs114251396." evidence="11 44">
    <original>R</original>
    <variation>W</variation>
    <location>
        <position position="4276"/>
    </location>
</feature>
<feature type="mutagenesis site" description="Does not affect auto-cleavage." evidence="37">
    <original>T</original>
    <variation>C</variation>
    <variation>S</variation>
    <location>
        <position position="3049"/>
    </location>
</feature>
<feature type="mutagenesis site" description="Does not undergo auto-cleavage." evidence="37">
    <original>T</original>
    <variation>G</variation>
    <variation>R</variation>
    <variation>V</variation>
    <location>
        <position position="3049"/>
    </location>
</feature>
<feature type="sequence conflict" description="In Ref. 1; AAC50128." evidence="60" ref="1">
    <original>A</original>
    <variation>E</variation>
    <location>
        <position position="71"/>
    </location>
</feature>
<feature type="sequence conflict" description="In Ref. 1; AAC50128." evidence="60" ref="1">
    <original>R</original>
    <variation>Q</variation>
    <location>
        <position position="138"/>
    </location>
</feature>
<feature type="sequence conflict" description="In Ref. 1; AAC50128." evidence="60" ref="1">
    <original>P</original>
    <variation>A</variation>
    <location>
        <position position="253"/>
    </location>
</feature>
<feature type="sequence conflict" description="In Ref. 1; AAC50128." evidence="60" ref="1">
    <original>A</original>
    <variation>D</variation>
    <location>
        <position position="302"/>
    </location>
</feature>
<feature type="sequence conflict" description="In Ref. 2; AAC37576/AAC41765." evidence="60" ref="2">
    <original>P</original>
    <variation>A</variation>
    <location>
        <position position="691"/>
    </location>
</feature>
<feature type="sequence conflict" description="In Ref. 1; AAC50128." evidence="60" ref="1">
    <original>A</original>
    <variation>G</variation>
    <location>
        <position position="763"/>
    </location>
</feature>
<feature type="sequence conflict" description="In Ref. 1; AAC50128." evidence="60" ref="1">
    <original>AT</original>
    <variation>QR</variation>
    <location>
        <begin position="774"/>
        <end position="775"/>
    </location>
</feature>
<feature type="sequence conflict" description="In Ref. 2; AAC37576/AAC41765." evidence="60" ref="2">
    <original>L</original>
    <variation>M</variation>
    <location>
        <position position="792"/>
    </location>
</feature>
<feature type="sequence conflict" description="In Ref. 1; AAC50128." evidence="60" ref="1">
    <original>V</original>
    <variation>L</variation>
    <location>
        <position position="866"/>
    </location>
</feature>
<feature type="sequence conflict" description="In Ref. 1; AAC50128." evidence="60" ref="1">
    <original>G</original>
    <variation>A</variation>
    <location>
        <position position="884"/>
    </location>
</feature>
<feature type="sequence conflict" description="In Ref. 2; AAC37576/AAC41765." evidence="60" ref="2">
    <original>T</original>
    <variation>N</variation>
    <location>
        <position position="1056"/>
    </location>
</feature>
<feature type="sequence conflict" description="In Ref. 1; AAC50128." evidence="60" ref="1">
    <original>A</original>
    <variation>G</variation>
    <location>
        <position position="1277"/>
    </location>
</feature>
<feature type="sequence conflict" description="In Ref. 2; AAC37576/AAC41765." evidence="60" ref="2">
    <original>A</original>
    <variation>T</variation>
    <location>
        <position position="1724"/>
    </location>
</feature>
<feature type="sequence conflict" description="In Ref. 2; AAC37576/AAC41765." evidence="60" ref="2">
    <original>V</original>
    <variation>M</variation>
    <location>
        <position position="1976"/>
    </location>
</feature>
<feature type="sequence conflict" description="In Ref. 1; AAC50128." evidence="60" ref="1">
    <original>QL</original>
    <variation>HV</variation>
    <location>
        <begin position="3982"/>
        <end position="3983"/>
    </location>
</feature>
<feature type="sequence conflict" description="In Ref. 1; AAC50128." evidence="60" ref="1">
    <original>QL</original>
    <variation>HV</variation>
    <location>
        <begin position="4005"/>
        <end position="4006"/>
    </location>
</feature>
<feature type="strand" evidence="63">
    <location>
        <begin position="276"/>
        <end position="278"/>
    </location>
</feature>
<feature type="strand" evidence="63">
    <location>
        <begin position="285"/>
        <end position="296"/>
    </location>
</feature>
<feature type="strand" evidence="63">
    <location>
        <begin position="301"/>
        <end position="306"/>
    </location>
</feature>
<feature type="strand" evidence="63">
    <location>
        <begin position="313"/>
        <end position="317"/>
    </location>
</feature>
<feature type="strand" evidence="63">
    <location>
        <begin position="320"/>
        <end position="325"/>
    </location>
</feature>
<feature type="strand" evidence="63">
    <location>
        <begin position="327"/>
        <end position="338"/>
    </location>
</feature>
<feature type="strand" evidence="63">
    <location>
        <begin position="343"/>
        <end position="353"/>
    </location>
</feature>
<gene>
    <name evidence="61" type="primary">PKD1</name>
</gene>
<name>PKD1_HUMAN</name>
<dbReference type="EMBL" id="U24497">
    <property type="protein sequence ID" value="AAC50128.1"/>
    <property type="molecule type" value="mRNA"/>
</dbReference>
<dbReference type="EMBL" id="L33243">
    <property type="protein sequence ID" value="AAC37576.1"/>
    <property type="molecule type" value="mRNA"/>
</dbReference>
<dbReference type="EMBL" id="L43619">
    <property type="protein sequence ID" value="AAC41765.1"/>
    <property type="molecule type" value="Genomic_DNA"/>
</dbReference>
<dbReference type="EMBL" id="L43601">
    <property type="protein sequence ID" value="AAC41765.1"/>
    <property type="status" value="JOINED"/>
    <property type="molecule type" value="Genomic_DNA"/>
</dbReference>
<dbReference type="EMBL" id="L43602">
    <property type="protein sequence ID" value="AAC41765.1"/>
    <property type="status" value="JOINED"/>
    <property type="molecule type" value="Genomic_DNA"/>
</dbReference>
<dbReference type="EMBL" id="L43604">
    <property type="protein sequence ID" value="AAC41765.1"/>
    <property type="status" value="JOINED"/>
    <property type="molecule type" value="Genomic_DNA"/>
</dbReference>
<dbReference type="EMBL" id="L43605">
    <property type="protein sequence ID" value="AAC41765.1"/>
    <property type="status" value="JOINED"/>
    <property type="molecule type" value="Genomic_DNA"/>
</dbReference>
<dbReference type="EMBL" id="L43610">
    <property type="protein sequence ID" value="AAC41765.1"/>
    <property type="status" value="JOINED"/>
    <property type="molecule type" value="Genomic_DNA"/>
</dbReference>
<dbReference type="EMBL" id="L43617">
    <property type="protein sequence ID" value="AAC41765.1"/>
    <property type="status" value="JOINED"/>
    <property type="molecule type" value="Genomic_DNA"/>
</dbReference>
<dbReference type="EMBL" id="L43618">
    <property type="protein sequence ID" value="AAC41765.1"/>
    <property type="status" value="JOINED"/>
    <property type="molecule type" value="Genomic_DNA"/>
</dbReference>
<dbReference type="EMBL" id="AC093513">
    <property type="status" value="NOT_ANNOTATED_CDS"/>
    <property type="molecule type" value="Genomic_DNA"/>
</dbReference>
<dbReference type="EMBL" id="AC009065">
    <property type="status" value="NOT_ANNOTATED_CDS"/>
    <property type="molecule type" value="Genomic_DNA"/>
</dbReference>
<dbReference type="CCDS" id="CCDS32369.1">
    <molecule id="P98161-1"/>
</dbReference>
<dbReference type="CCDS" id="CCDS45385.1">
    <molecule id="P98161-3"/>
</dbReference>
<dbReference type="PIR" id="A38971">
    <property type="entry name" value="A38971"/>
</dbReference>
<dbReference type="RefSeq" id="NP_000287.3">
    <molecule id="P98161-3"/>
    <property type="nucleotide sequence ID" value="NM_000296.3"/>
</dbReference>
<dbReference type="RefSeq" id="NP_001009944.3">
    <molecule id="P98161-1"/>
    <property type="nucleotide sequence ID" value="NM_001009944.3"/>
</dbReference>
<dbReference type="PDB" id="1B4R">
    <property type="method" value="NMR"/>
    <property type="chains" value="A=275-354"/>
</dbReference>
<dbReference type="PDB" id="6A70">
    <property type="method" value="EM"/>
    <property type="resolution" value="3.60 A"/>
    <property type="chains" value="B=3049-4169"/>
</dbReference>
<dbReference type="PDBsum" id="1B4R"/>
<dbReference type="PDBsum" id="6A70"/>
<dbReference type="EMDB" id="EMD-6991"/>
<dbReference type="EMDB" id="EMD-6992"/>
<dbReference type="SMR" id="P98161"/>
<dbReference type="BioGRID" id="111327">
    <property type="interactions" value="50"/>
</dbReference>
<dbReference type="ComplexPortal" id="CPX-4001">
    <property type="entry name" value="PKD1-PKD2 Polycystin complex"/>
</dbReference>
<dbReference type="CORUM" id="P98161"/>
<dbReference type="DIP" id="DIP-52317N"/>
<dbReference type="FunCoup" id="P98161">
    <property type="interactions" value="233"/>
</dbReference>
<dbReference type="IntAct" id="P98161">
    <property type="interactions" value="16"/>
</dbReference>
<dbReference type="MINT" id="P98161"/>
<dbReference type="STRING" id="9606.ENSP00000262304"/>
<dbReference type="BindingDB" id="P98161"/>
<dbReference type="ChEMBL" id="CHEMBL5772"/>
<dbReference type="MEROPS" id="P02.036"/>
<dbReference type="TCDB" id="1.A.5.1.1">
    <property type="family name" value="the polycystin cation channel (pcc) family"/>
</dbReference>
<dbReference type="GlyCosmos" id="P98161">
    <property type="glycosylation" value="60 sites, No reported glycans"/>
</dbReference>
<dbReference type="GlyGen" id="P98161">
    <property type="glycosylation" value="67 sites, 7 N-linked glycans (18 sites), 1 O-linked glycan (1 site)"/>
</dbReference>
<dbReference type="iPTMnet" id="P98161"/>
<dbReference type="PhosphoSitePlus" id="P98161"/>
<dbReference type="BioMuta" id="PKD1"/>
<dbReference type="DMDM" id="292495072"/>
<dbReference type="MassIVE" id="P98161"/>
<dbReference type="PaxDb" id="9606-ENSP00000262304"/>
<dbReference type="PeptideAtlas" id="P98161"/>
<dbReference type="ProteomicsDB" id="57797">
    <molecule id="P98161-1"/>
</dbReference>
<dbReference type="ProteomicsDB" id="57798">
    <molecule id="P98161-2"/>
</dbReference>
<dbReference type="ProteomicsDB" id="57799">
    <molecule id="P98161-3"/>
</dbReference>
<dbReference type="Antibodypedia" id="23502">
    <property type="antibodies" value="197 antibodies from 30 providers"/>
</dbReference>
<dbReference type="DNASU" id="5310"/>
<dbReference type="Ensembl" id="ENST00000262304.9">
    <molecule id="P98161-1"/>
    <property type="protein sequence ID" value="ENSP00000262304.4"/>
    <property type="gene ID" value="ENSG00000008710.20"/>
</dbReference>
<dbReference type="Ensembl" id="ENST00000423118.5">
    <molecule id="P98161-3"/>
    <property type="protein sequence ID" value="ENSP00000399501.1"/>
    <property type="gene ID" value="ENSG00000008710.20"/>
</dbReference>
<dbReference type="GeneID" id="5310"/>
<dbReference type="KEGG" id="hsa:5310"/>
<dbReference type="MANE-Select" id="ENST00000262304.9">
    <property type="protein sequence ID" value="ENSP00000262304.4"/>
    <property type="RefSeq nucleotide sequence ID" value="NM_001009944.3"/>
    <property type="RefSeq protein sequence ID" value="NP_001009944.3"/>
</dbReference>
<dbReference type="UCSC" id="uc002cos.1">
    <molecule id="P98161-1"/>
    <property type="organism name" value="human"/>
</dbReference>
<dbReference type="AGR" id="HGNC:9008"/>
<dbReference type="CTD" id="5310"/>
<dbReference type="DisGeNET" id="5310"/>
<dbReference type="GeneCards" id="PKD1"/>
<dbReference type="GeneReviews" id="PKD1"/>
<dbReference type="HGNC" id="HGNC:9008">
    <property type="gene designation" value="PKD1"/>
</dbReference>
<dbReference type="HPA" id="ENSG00000008710">
    <property type="expression patterns" value="Tissue enhanced (brain)"/>
</dbReference>
<dbReference type="MalaCards" id="PKD1"/>
<dbReference type="MIM" id="173900">
    <property type="type" value="phenotype"/>
</dbReference>
<dbReference type="MIM" id="601313">
    <property type="type" value="gene"/>
</dbReference>
<dbReference type="neXtProt" id="NX_P98161"/>
<dbReference type="OpenTargets" id="ENSG00000008710"/>
<dbReference type="Orphanet" id="730">
    <property type="disease" value="Autosomal dominant polycystic kidney disease"/>
</dbReference>
<dbReference type="Orphanet" id="88924">
    <property type="disease" value="Autosomal dominant polycystic kidney disease type 1 with tuberous sclerosis"/>
</dbReference>
<dbReference type="PharmGKB" id="PA35521"/>
<dbReference type="VEuPathDB" id="HostDB:ENSG00000008710"/>
<dbReference type="eggNOG" id="KOG3599">
    <property type="taxonomic scope" value="Eukaryota"/>
</dbReference>
<dbReference type="GeneTree" id="ENSGT00940000158702"/>
<dbReference type="HOGENOM" id="CLU_000173_0_0_1"/>
<dbReference type="InParanoid" id="P98161"/>
<dbReference type="OMA" id="GENHVSW"/>
<dbReference type="OrthoDB" id="6022660at2759"/>
<dbReference type="PAN-GO" id="P98161">
    <property type="GO annotations" value="3 GO annotations based on evolutionary models"/>
</dbReference>
<dbReference type="PhylomeDB" id="P98161"/>
<dbReference type="TreeFam" id="TF316484"/>
<dbReference type="PathwayCommons" id="P98161"/>
<dbReference type="Reactome" id="R-HSA-5620916">
    <property type="pathway name" value="VxPx cargo-targeting to cilium"/>
</dbReference>
<dbReference type="SignaLink" id="P98161"/>
<dbReference type="SIGNOR" id="P98161"/>
<dbReference type="BioGRID-ORCS" id="5310">
    <property type="hits" value="30 hits in 1173 CRISPR screens"/>
</dbReference>
<dbReference type="ChiTaRS" id="PKD1">
    <property type="organism name" value="human"/>
</dbReference>
<dbReference type="EvolutionaryTrace" id="P98161"/>
<dbReference type="GeneWiki" id="PKD1"/>
<dbReference type="GenomeRNAi" id="5310"/>
<dbReference type="Pharos" id="P98161">
    <property type="development level" value="Tbio"/>
</dbReference>
<dbReference type="PRO" id="PR:P98161"/>
<dbReference type="Proteomes" id="UP000005640">
    <property type="component" value="Chromosome 16"/>
</dbReference>
<dbReference type="RNAct" id="P98161">
    <property type="molecule type" value="protein"/>
</dbReference>
<dbReference type="Bgee" id="ENSG00000008710">
    <property type="expression patterns" value="Expressed in right hemisphere of cerebellum and 203 other cell types or tissues"/>
</dbReference>
<dbReference type="ExpressionAtlas" id="P98161">
    <property type="expression patterns" value="baseline and differential"/>
</dbReference>
<dbReference type="GO" id="GO:0016323">
    <property type="term" value="C:basolateral plasma membrane"/>
    <property type="evidence" value="ECO:0000314"/>
    <property type="project" value="BHF-UCL"/>
</dbReference>
<dbReference type="GO" id="GO:0034704">
    <property type="term" value="C:calcium channel complex"/>
    <property type="evidence" value="ECO:0000314"/>
    <property type="project" value="UniProtKB"/>
</dbReference>
<dbReference type="GO" id="GO:0034703">
    <property type="term" value="C:cation channel complex"/>
    <property type="evidence" value="ECO:0000314"/>
    <property type="project" value="UniProtKB"/>
</dbReference>
<dbReference type="GO" id="GO:0009986">
    <property type="term" value="C:cell surface"/>
    <property type="evidence" value="ECO:0007669"/>
    <property type="project" value="Ensembl"/>
</dbReference>
<dbReference type="GO" id="GO:0060170">
    <property type="term" value="C:ciliary membrane"/>
    <property type="evidence" value="ECO:0000304"/>
    <property type="project" value="Reactome"/>
</dbReference>
<dbReference type="GO" id="GO:0005929">
    <property type="term" value="C:cilium"/>
    <property type="evidence" value="ECO:0000314"/>
    <property type="project" value="MGI"/>
</dbReference>
<dbReference type="GO" id="GO:0005737">
    <property type="term" value="C:cytoplasm"/>
    <property type="evidence" value="ECO:0000250"/>
    <property type="project" value="BHF-UCL"/>
</dbReference>
<dbReference type="GO" id="GO:0005783">
    <property type="term" value="C:endoplasmic reticulum"/>
    <property type="evidence" value="ECO:0000250"/>
    <property type="project" value="UniProtKB"/>
</dbReference>
<dbReference type="GO" id="GO:0070062">
    <property type="term" value="C:extracellular exosome"/>
    <property type="evidence" value="ECO:0000314"/>
    <property type="project" value="UniProtKB"/>
</dbReference>
<dbReference type="GO" id="GO:0005794">
    <property type="term" value="C:Golgi apparatus"/>
    <property type="evidence" value="ECO:0000250"/>
    <property type="project" value="UniProtKB"/>
</dbReference>
<dbReference type="GO" id="GO:0000139">
    <property type="term" value="C:Golgi membrane"/>
    <property type="evidence" value="ECO:0000304"/>
    <property type="project" value="Reactome"/>
</dbReference>
<dbReference type="GO" id="GO:0030660">
    <property type="term" value="C:Golgi-associated vesicle membrane"/>
    <property type="evidence" value="ECO:0000304"/>
    <property type="project" value="Reactome"/>
</dbReference>
<dbReference type="GO" id="GO:0016328">
    <property type="term" value="C:lateral plasma membrane"/>
    <property type="evidence" value="ECO:0007669"/>
    <property type="project" value="Ensembl"/>
</dbReference>
<dbReference type="GO" id="GO:0016020">
    <property type="term" value="C:membrane"/>
    <property type="evidence" value="ECO:0000314"/>
    <property type="project" value="ComplexPortal"/>
</dbReference>
<dbReference type="GO" id="GO:0140494">
    <property type="term" value="C:migrasome"/>
    <property type="evidence" value="ECO:0000314"/>
    <property type="project" value="UniProtKB"/>
</dbReference>
<dbReference type="GO" id="GO:0031514">
    <property type="term" value="C:motile cilium"/>
    <property type="evidence" value="ECO:0000250"/>
    <property type="project" value="BHF-UCL"/>
</dbReference>
<dbReference type="GO" id="GO:0005634">
    <property type="term" value="C:nucleus"/>
    <property type="evidence" value="ECO:0000250"/>
    <property type="project" value="BHF-UCL"/>
</dbReference>
<dbReference type="GO" id="GO:0005886">
    <property type="term" value="C:plasma membrane"/>
    <property type="evidence" value="ECO:0000314"/>
    <property type="project" value="UniProtKB"/>
</dbReference>
<dbReference type="GO" id="GO:0002133">
    <property type="term" value="C:polycystin complex"/>
    <property type="evidence" value="ECO:0000353"/>
    <property type="project" value="ComplexPortal"/>
</dbReference>
<dbReference type="GO" id="GO:0005262">
    <property type="term" value="F:calcium channel activity"/>
    <property type="evidence" value="ECO:0000250"/>
    <property type="project" value="BHF-UCL"/>
</dbReference>
<dbReference type="GO" id="GO:0030246">
    <property type="term" value="F:carbohydrate binding"/>
    <property type="evidence" value="ECO:0007669"/>
    <property type="project" value="UniProtKB-KW"/>
</dbReference>
<dbReference type="GO" id="GO:0019904">
    <property type="term" value="F:protein domain specific binding"/>
    <property type="evidence" value="ECO:0000353"/>
    <property type="project" value="BHF-UCL"/>
</dbReference>
<dbReference type="GO" id="GO:0019901">
    <property type="term" value="F:protein kinase binding"/>
    <property type="evidence" value="ECO:0000353"/>
    <property type="project" value="UniProtKB"/>
</dbReference>
<dbReference type="GO" id="GO:0140416">
    <property type="term" value="F:transcription regulator inhibitor activity"/>
    <property type="evidence" value="ECO:0000250"/>
    <property type="project" value="BHF-UCL"/>
</dbReference>
<dbReference type="GO" id="GO:0044325">
    <property type="term" value="F:transmembrane transporter binding"/>
    <property type="evidence" value="ECO:0000353"/>
    <property type="project" value="BHF-UCL"/>
</dbReference>
<dbReference type="GO" id="GO:0042813">
    <property type="term" value="F:Wnt receptor activity"/>
    <property type="evidence" value="ECO:0000314"/>
    <property type="project" value="UniProtKB"/>
</dbReference>
<dbReference type="GO" id="GO:0009653">
    <property type="term" value="P:anatomical structure morphogenesis"/>
    <property type="evidence" value="ECO:0000304"/>
    <property type="project" value="ProtInc"/>
</dbReference>
<dbReference type="GO" id="GO:0048754">
    <property type="term" value="P:branching morphogenesis of an epithelial tube"/>
    <property type="evidence" value="ECO:0000314"/>
    <property type="project" value="UniProtKB"/>
</dbReference>
<dbReference type="GO" id="GO:0070588">
    <property type="term" value="P:calcium ion transmembrane transport"/>
    <property type="evidence" value="ECO:0000250"/>
    <property type="project" value="BHF-UCL"/>
</dbReference>
<dbReference type="GO" id="GO:0006816">
    <property type="term" value="P:calcium ion transport"/>
    <property type="evidence" value="ECO:0000314"/>
    <property type="project" value="ComplexPortal"/>
</dbReference>
<dbReference type="GO" id="GO:0007161">
    <property type="term" value="P:calcium-independent cell-matrix adhesion"/>
    <property type="evidence" value="ECO:0000304"/>
    <property type="project" value="ProtInc"/>
</dbReference>
<dbReference type="GO" id="GO:0001502">
    <property type="term" value="P:cartilage condensation"/>
    <property type="evidence" value="ECO:0007669"/>
    <property type="project" value="Ensembl"/>
</dbReference>
<dbReference type="GO" id="GO:0051216">
    <property type="term" value="P:cartilage development"/>
    <property type="evidence" value="ECO:0000270"/>
    <property type="project" value="UniProtKB"/>
</dbReference>
<dbReference type="GO" id="GO:0007166">
    <property type="term" value="P:cell surface receptor signaling pathway"/>
    <property type="evidence" value="ECO:0000314"/>
    <property type="project" value="UniProtKB"/>
</dbReference>
<dbReference type="GO" id="GO:0007259">
    <property type="term" value="P:cell surface receptor signaling pathway via JAK-STAT"/>
    <property type="evidence" value="ECO:0000250"/>
    <property type="project" value="BHF-UCL"/>
</dbReference>
<dbReference type="GO" id="GO:0007160">
    <property type="term" value="P:cell-matrix adhesion"/>
    <property type="evidence" value="ECO:0000304"/>
    <property type="project" value="ProtInc"/>
</dbReference>
<dbReference type="GO" id="GO:0050982">
    <property type="term" value="P:detection of mechanical stimulus"/>
    <property type="evidence" value="ECO:0000250"/>
    <property type="project" value="BHF-UCL"/>
</dbReference>
<dbReference type="GO" id="GO:0048565">
    <property type="term" value="P:digestive tract development"/>
    <property type="evidence" value="ECO:0000270"/>
    <property type="project" value="UniProtKB"/>
</dbReference>
<dbReference type="GO" id="GO:0001892">
    <property type="term" value="P:embryonic placenta development"/>
    <property type="evidence" value="ECO:0000250"/>
    <property type="project" value="BHF-UCL"/>
</dbReference>
<dbReference type="GO" id="GO:0030010">
    <property type="term" value="P:establishment of cell polarity"/>
    <property type="evidence" value="ECO:0007669"/>
    <property type="project" value="Ensembl"/>
</dbReference>
<dbReference type="GO" id="GO:0048806">
    <property type="term" value="P:genitalia development"/>
    <property type="evidence" value="ECO:0000270"/>
    <property type="project" value="UniProtKB"/>
</dbReference>
<dbReference type="GO" id="GO:0007507">
    <property type="term" value="P:heart development"/>
    <property type="evidence" value="ECO:0000270"/>
    <property type="project" value="UniProtKB"/>
</dbReference>
<dbReference type="GO" id="GO:0007156">
    <property type="term" value="P:homophilic cell adhesion via plasma membrane adhesion molecules"/>
    <property type="evidence" value="ECO:0000304"/>
    <property type="project" value="ProtInc"/>
</dbReference>
<dbReference type="GO" id="GO:0001701">
    <property type="term" value="P:in utero embryonic development"/>
    <property type="evidence" value="ECO:0000250"/>
    <property type="project" value="BHF-UCL"/>
</dbReference>
<dbReference type="GO" id="GO:0001822">
    <property type="term" value="P:kidney development"/>
    <property type="evidence" value="ECO:0000250"/>
    <property type="project" value="BHF-UCL"/>
</dbReference>
<dbReference type="GO" id="GO:0001889">
    <property type="term" value="P:liver development"/>
    <property type="evidence" value="ECO:0007669"/>
    <property type="project" value="Ensembl"/>
</dbReference>
<dbReference type="GO" id="GO:0060428">
    <property type="term" value="P:lung epithelium development"/>
    <property type="evidence" value="ECO:0000270"/>
    <property type="project" value="UniProtKB"/>
</dbReference>
<dbReference type="GO" id="GO:0036303">
    <property type="term" value="P:lymph vessel morphogenesis"/>
    <property type="evidence" value="ECO:0007669"/>
    <property type="project" value="Ensembl"/>
</dbReference>
<dbReference type="GO" id="GO:0072177">
    <property type="term" value="P:mesonephric duct development"/>
    <property type="evidence" value="ECO:0000270"/>
    <property type="project" value="UniProtKB"/>
</dbReference>
<dbReference type="GO" id="GO:0072164">
    <property type="term" value="P:mesonephric tubule development"/>
    <property type="evidence" value="ECO:0000270"/>
    <property type="project" value="UniProtKB"/>
</dbReference>
<dbReference type="GO" id="GO:0072218">
    <property type="term" value="P:metanephric ascending thin limb development"/>
    <property type="evidence" value="ECO:0000270"/>
    <property type="project" value="UniProtKB"/>
</dbReference>
<dbReference type="GO" id="GO:0072205">
    <property type="term" value="P:metanephric collecting duct development"/>
    <property type="evidence" value="ECO:0000270"/>
    <property type="project" value="UniProtKB"/>
</dbReference>
<dbReference type="GO" id="GO:0072287">
    <property type="term" value="P:metanephric distal tubule morphogenesis"/>
    <property type="evidence" value="ECO:0000270"/>
    <property type="project" value="UniProtKB"/>
</dbReference>
<dbReference type="GO" id="GO:0072237">
    <property type="term" value="P:metanephric proximal tubule development"/>
    <property type="evidence" value="ECO:0000270"/>
    <property type="project" value="UniProtKB"/>
</dbReference>
<dbReference type="GO" id="GO:0160040">
    <property type="term" value="P:mitocytosis"/>
    <property type="evidence" value="ECO:0000314"/>
    <property type="project" value="UniProtKB"/>
</dbReference>
<dbReference type="GO" id="GO:0021915">
    <property type="term" value="P:neural tube development"/>
    <property type="evidence" value="ECO:0000270"/>
    <property type="project" value="UniProtKB"/>
</dbReference>
<dbReference type="GO" id="GO:0071941">
    <property type="term" value="P:nitrogen cycle metabolic process"/>
    <property type="evidence" value="ECO:0007669"/>
    <property type="project" value="Ensembl"/>
</dbReference>
<dbReference type="GO" id="GO:0018105">
    <property type="term" value="P:peptidyl-serine phosphorylation"/>
    <property type="evidence" value="ECO:0000250"/>
    <property type="project" value="BHF-UCL"/>
</dbReference>
<dbReference type="GO" id="GO:0060674">
    <property type="term" value="P:placenta blood vessel development"/>
    <property type="evidence" value="ECO:0000250"/>
    <property type="project" value="BHF-UCL"/>
</dbReference>
<dbReference type="GO" id="GO:0007204">
    <property type="term" value="P:positive regulation of cytosolic calcium ion concentration"/>
    <property type="evidence" value="ECO:0007669"/>
    <property type="project" value="Ensembl"/>
</dbReference>
<dbReference type="GO" id="GO:0045944">
    <property type="term" value="P:positive regulation of transcription by RNA polymerase II"/>
    <property type="evidence" value="ECO:0000314"/>
    <property type="project" value="BHF-UCL"/>
</dbReference>
<dbReference type="GO" id="GO:0006611">
    <property type="term" value="P:protein export from nucleus"/>
    <property type="evidence" value="ECO:0000250"/>
    <property type="project" value="BHF-UCL"/>
</dbReference>
<dbReference type="GO" id="GO:0051290">
    <property type="term" value="P:protein heterotetramerization"/>
    <property type="evidence" value="ECO:0000314"/>
    <property type="project" value="UniProtKB"/>
</dbReference>
<dbReference type="GO" id="GO:0030155">
    <property type="term" value="P:regulation of cell adhesion"/>
    <property type="evidence" value="ECO:0007669"/>
    <property type="project" value="Ensembl"/>
</dbReference>
<dbReference type="GO" id="GO:0051726">
    <property type="term" value="P:regulation of cell cycle"/>
    <property type="evidence" value="ECO:0000250"/>
    <property type="project" value="BHF-UCL"/>
</dbReference>
<dbReference type="GO" id="GO:2000045">
    <property type="term" value="P:regulation of G1/S transition of mitotic cell cycle"/>
    <property type="evidence" value="ECO:0000314"/>
    <property type="project" value="BHF-UCL"/>
</dbReference>
<dbReference type="GO" id="GO:0060236">
    <property type="term" value="P:regulation of mitotic spindle organization"/>
    <property type="evidence" value="ECO:0007669"/>
    <property type="project" value="Ensembl"/>
</dbReference>
<dbReference type="GO" id="GO:0061136">
    <property type="term" value="P:regulation of proteasomal protein catabolic process"/>
    <property type="evidence" value="ECO:0000314"/>
    <property type="project" value="MGI"/>
</dbReference>
<dbReference type="GO" id="GO:0034405">
    <property type="term" value="P:response to fluid shear stress"/>
    <property type="evidence" value="ECO:0007669"/>
    <property type="project" value="Ensembl"/>
</dbReference>
<dbReference type="GO" id="GO:0043588">
    <property type="term" value="P:skin development"/>
    <property type="evidence" value="ECO:0000270"/>
    <property type="project" value="UniProtKB"/>
</dbReference>
<dbReference type="GO" id="GO:0021510">
    <property type="term" value="P:spinal cord development"/>
    <property type="evidence" value="ECO:0000270"/>
    <property type="project" value="UniProtKB"/>
</dbReference>
<dbReference type="GO" id="GO:0016055">
    <property type="term" value="P:Wnt signaling pathway"/>
    <property type="evidence" value="ECO:0000314"/>
    <property type="project" value="ComplexPortal"/>
</dbReference>
<dbReference type="CDD" id="cd00037">
    <property type="entry name" value="CLECT"/>
    <property type="match status" value="1"/>
</dbReference>
<dbReference type="CDD" id="cd00146">
    <property type="entry name" value="PKD"/>
    <property type="match status" value="12"/>
</dbReference>
<dbReference type="CDD" id="cd01752">
    <property type="entry name" value="PLAT_polycystin"/>
    <property type="match status" value="1"/>
</dbReference>
<dbReference type="FunFam" id="2.60.40.10:FF:001786">
    <property type="entry name" value="PKD1 isoform 1"/>
    <property type="match status" value="1"/>
</dbReference>
<dbReference type="FunFam" id="3.10.100.10:FF:000086">
    <property type="entry name" value="PKD1 isoform 1"/>
    <property type="match status" value="1"/>
</dbReference>
<dbReference type="FunFam" id="2.60.40.10:FF:000825">
    <property type="entry name" value="Polycystin 1, transient receptor potential channel interacting"/>
    <property type="match status" value="2"/>
</dbReference>
<dbReference type="FunFam" id="2.60.40.10:FF:001724">
    <property type="entry name" value="Polycystin 1, transient receptor potential channel-interacting"/>
    <property type="match status" value="1"/>
</dbReference>
<dbReference type="FunFam" id="2.60.60.20:FF:000012">
    <property type="entry name" value="polycystin-1 isoform X2"/>
    <property type="match status" value="1"/>
</dbReference>
<dbReference type="FunFam" id="3.80.10.10:FF:000614">
    <property type="entry name" value="polycystin-1 isoform X2"/>
    <property type="match status" value="1"/>
</dbReference>
<dbReference type="Gene3D" id="2.60.40.10">
    <property type="entry name" value="Immunoglobulins"/>
    <property type="match status" value="11"/>
</dbReference>
<dbReference type="Gene3D" id="3.10.100.10">
    <property type="entry name" value="Mannose-Binding Protein A, subunit A"/>
    <property type="match status" value="1"/>
</dbReference>
<dbReference type="Gene3D" id="2.60.60.20">
    <property type="entry name" value="PLAT/LH2 domain"/>
    <property type="match status" value="1"/>
</dbReference>
<dbReference type="Gene3D" id="3.80.10.10">
    <property type="entry name" value="Ribonuclease Inhibitor"/>
    <property type="match status" value="1"/>
</dbReference>
<dbReference type="InterPro" id="IPR001304">
    <property type="entry name" value="C-type_lectin-like"/>
</dbReference>
<dbReference type="InterPro" id="IPR016186">
    <property type="entry name" value="C-type_lectin-like/link_sf"/>
</dbReference>
<dbReference type="InterPro" id="IPR016187">
    <property type="entry name" value="CTDL_fold"/>
</dbReference>
<dbReference type="InterPro" id="IPR000483">
    <property type="entry name" value="Cys-rich_flank_reg_C"/>
</dbReference>
<dbReference type="InterPro" id="IPR057244">
    <property type="entry name" value="GAIN_B"/>
</dbReference>
<dbReference type="InterPro" id="IPR000203">
    <property type="entry name" value="GPS"/>
</dbReference>
<dbReference type="InterPro" id="IPR013783">
    <property type="entry name" value="Ig-like_fold"/>
</dbReference>
<dbReference type="InterPro" id="IPR001611">
    <property type="entry name" value="Leu-rich_rpt"/>
</dbReference>
<dbReference type="InterPro" id="IPR003591">
    <property type="entry name" value="Leu-rich_rpt_typical-subtyp"/>
</dbReference>
<dbReference type="InterPro" id="IPR032675">
    <property type="entry name" value="LRR_dom_sf"/>
</dbReference>
<dbReference type="InterPro" id="IPR000372">
    <property type="entry name" value="LRRNT"/>
</dbReference>
<dbReference type="InterPro" id="IPR000434">
    <property type="entry name" value="PC1"/>
</dbReference>
<dbReference type="InterPro" id="IPR022409">
    <property type="entry name" value="PKD/Chitinase_dom"/>
</dbReference>
<dbReference type="InterPro" id="IPR002859">
    <property type="entry name" value="PKD/REJ-like"/>
</dbReference>
<dbReference type="InterPro" id="IPR013122">
    <property type="entry name" value="PKD1_2_channel"/>
</dbReference>
<dbReference type="InterPro" id="IPR000601">
    <property type="entry name" value="PKD_dom"/>
</dbReference>
<dbReference type="InterPro" id="IPR035986">
    <property type="entry name" value="PKD_dom_sf"/>
</dbReference>
<dbReference type="InterPro" id="IPR001024">
    <property type="entry name" value="PLAT/LH2_dom"/>
</dbReference>
<dbReference type="InterPro" id="IPR036392">
    <property type="entry name" value="PLAT/LH2_dom_sf"/>
</dbReference>
<dbReference type="InterPro" id="IPR042060">
    <property type="entry name" value="PLAT_polycystin1"/>
</dbReference>
<dbReference type="InterPro" id="IPR006228">
    <property type="entry name" value="Polycystin_cat"/>
</dbReference>
<dbReference type="InterPro" id="IPR046791">
    <property type="entry name" value="Polycystin_dom"/>
</dbReference>
<dbReference type="InterPro" id="IPR014010">
    <property type="entry name" value="REJ_dom"/>
</dbReference>
<dbReference type="InterPro" id="IPR002889">
    <property type="entry name" value="WSC_carb-bd"/>
</dbReference>
<dbReference type="NCBIfam" id="TIGR00864">
    <property type="entry name" value="PCC"/>
    <property type="match status" value="1"/>
</dbReference>
<dbReference type="PANTHER" id="PTHR46730">
    <property type="entry name" value="POLYCYSTIN-1"/>
    <property type="match status" value="1"/>
</dbReference>
<dbReference type="PANTHER" id="PTHR46730:SF3">
    <property type="entry name" value="POLYCYSTIN-1"/>
    <property type="match status" value="1"/>
</dbReference>
<dbReference type="Pfam" id="PF00059">
    <property type="entry name" value="Lectin_C"/>
    <property type="match status" value="1"/>
</dbReference>
<dbReference type="Pfam" id="PF13855">
    <property type="entry name" value="LRR_8"/>
    <property type="match status" value="1"/>
</dbReference>
<dbReference type="Pfam" id="PF00801">
    <property type="entry name" value="PKD"/>
    <property type="match status" value="15"/>
</dbReference>
<dbReference type="Pfam" id="PF08016">
    <property type="entry name" value="PKD_channel"/>
    <property type="match status" value="1"/>
</dbReference>
<dbReference type="Pfam" id="PF01477">
    <property type="entry name" value="PLAT"/>
    <property type="match status" value="1"/>
</dbReference>
<dbReference type="Pfam" id="PF20519">
    <property type="entry name" value="Polycystin_dom"/>
    <property type="match status" value="1"/>
</dbReference>
<dbReference type="Pfam" id="PF02010">
    <property type="entry name" value="REJ"/>
    <property type="match status" value="1"/>
</dbReference>
<dbReference type="Pfam" id="PF01822">
    <property type="entry name" value="WSC"/>
    <property type="match status" value="1"/>
</dbReference>
<dbReference type="PRINTS" id="PR00500">
    <property type="entry name" value="POLYCYSTIN1"/>
</dbReference>
<dbReference type="SMART" id="SM00034">
    <property type="entry name" value="CLECT"/>
    <property type="match status" value="1"/>
</dbReference>
<dbReference type="SMART" id="SM00303">
    <property type="entry name" value="GPS"/>
    <property type="match status" value="1"/>
</dbReference>
<dbReference type="SMART" id="SM00308">
    <property type="entry name" value="LH2"/>
    <property type="match status" value="1"/>
</dbReference>
<dbReference type="SMART" id="SM00369">
    <property type="entry name" value="LRR_TYP"/>
    <property type="match status" value="2"/>
</dbReference>
<dbReference type="SMART" id="SM00082">
    <property type="entry name" value="LRRCT"/>
    <property type="match status" value="1"/>
</dbReference>
<dbReference type="SMART" id="SM00013">
    <property type="entry name" value="LRRNT"/>
    <property type="match status" value="1"/>
</dbReference>
<dbReference type="SMART" id="SM00089">
    <property type="entry name" value="PKD"/>
    <property type="match status" value="15"/>
</dbReference>
<dbReference type="SMART" id="SM00321">
    <property type="entry name" value="WSC"/>
    <property type="match status" value="1"/>
</dbReference>
<dbReference type="SUPFAM" id="SSF56436">
    <property type="entry name" value="C-type lectin-like"/>
    <property type="match status" value="1"/>
</dbReference>
<dbReference type="SUPFAM" id="SSF52058">
    <property type="entry name" value="L domain-like"/>
    <property type="match status" value="1"/>
</dbReference>
<dbReference type="SUPFAM" id="SSF49723">
    <property type="entry name" value="Lipase/lipooxygenase domain (PLAT/LH2 domain)"/>
    <property type="match status" value="1"/>
</dbReference>
<dbReference type="SUPFAM" id="SSF49299">
    <property type="entry name" value="PKD domain"/>
    <property type="match status" value="13"/>
</dbReference>
<dbReference type="PROSITE" id="PS50041">
    <property type="entry name" value="C_TYPE_LECTIN_2"/>
    <property type="match status" value="1"/>
</dbReference>
<dbReference type="PROSITE" id="PS50221">
    <property type="entry name" value="GAIN_B"/>
    <property type="match status" value="1"/>
</dbReference>
<dbReference type="PROSITE" id="PS51450">
    <property type="entry name" value="LRR"/>
    <property type="match status" value="2"/>
</dbReference>
<dbReference type="PROSITE" id="PS50093">
    <property type="entry name" value="PKD"/>
    <property type="match status" value="12"/>
</dbReference>
<dbReference type="PROSITE" id="PS50095">
    <property type="entry name" value="PLAT"/>
    <property type="match status" value="1"/>
</dbReference>
<dbReference type="PROSITE" id="PS51111">
    <property type="entry name" value="REJ"/>
    <property type="match status" value="1"/>
</dbReference>
<dbReference type="PROSITE" id="PS51212">
    <property type="entry name" value="WSC"/>
    <property type="match status" value="1"/>
</dbReference>
<comment type="function">
    <text evidence="2 34 46 49">Component of a heteromeric calcium-permeable ion channel formed by PKD1 and PKD2 that is activated by interaction between PKD1 and a Wnt family member, such as WNT3A and WNT9B (PubMed:27214281). Both PKD1 and PKD2 are required for channel activity (PubMed:27214281). Involved in renal tubulogenesis (PubMed:12482949). Involved in fluid-flow mechanosensation by the primary cilium in renal epithelium (By similarity). Acts as a regulator of cilium length, together with PKD2 (By similarity). The dynamic control of cilium length is essential in the regulation of mechanotransductive signaling (By similarity). The cilium length response creates a negative feedback loop whereby fluid shear-mediated deflection of the primary cilium, which decreases intracellular cAMP, leads to cilium shortening and thus decreases flow-induced signaling (By similarity). May be an ion-channel regulator. Involved in adhesive protein-protein and protein-carbohydrate interactions. Likely to be involved with polycystin-1-interacting protein 1 in the detection, sequestration and exocytosis of senescent mitochondria (PubMed:37681898).</text>
</comment>
<comment type="subunit">
    <text evidence="2 12 38 40 41 45 46 48 49">Component of the heterotetrameric polycystin channel complex with PKD2; the tetramer contains one PKD1 chain and three PKD2 chains (PubMed:30093605). Interacts with PKD2; the interaction is required for ciliary localization (PubMed:20881056). Interacts with PKD2L1 (By similarity). Interacts with PRKX; involved in differentiation and controlled morphogenesis of the kidney (PubMed:17980165). Interacts (via extracellular domain) with WNT3A, WNT4, WNT5A and WNT9B (PubMed:27214281). Interacts with DVL1 and DVL2 (PubMed:27214281). Interacts with NPHP1 (via SH3 domain) (PubMed:20856870). Interacts with BBS1, BBS4, BBS5 and TTC8 (PubMed:24939912). Interacts with RGS7 (PubMed:10339594). Interacts (via the PKD repeats in the N-terminal extracellular region) with EPCIP; the interaction is not dependent on N-glycosylation of either protein (PubMed:37681898).</text>
</comment>
<comment type="interaction">
    <interactant intactId="EBI-1752013">
        <id>P98161</id>
    </interactant>
    <interactant intactId="EBI-55030256">
        <id>Q9NYP8</id>
        <label>EPCIP</label>
    </interactant>
    <organismsDiffer>false</organismsDiffer>
    <experiments>6</experiments>
</comment>
<comment type="interaction">
    <interactant intactId="EBI-1752013">
        <id>P98161</id>
    </interactant>
    <interactant intactId="EBI-953828">
        <id>O15259</id>
        <label>NPHP1</label>
    </interactant>
    <organismsDiffer>false</organismsDiffer>
    <experiments>2</experiments>
</comment>
<comment type="interaction">
    <interactant intactId="EBI-1752013">
        <id>P98161</id>
    </interactant>
    <interactant intactId="EBI-7813714">
        <id>Q13563</id>
        <label>PKD2</label>
    </interactant>
    <organismsDiffer>false</organismsDiffer>
    <experiments>8</experiments>
</comment>
<comment type="interaction">
    <interactant intactId="EBI-1752013">
        <id>P98161</id>
    </interactant>
    <interactant intactId="EBI-9837017">
        <id>Q13563-1</id>
        <label>PKD2</label>
    </interactant>
    <organismsDiffer>false</organismsDiffer>
    <experiments>5</experiments>
</comment>
<comment type="interaction">
    <interactant intactId="EBI-1951183">
        <id>P98161-1</id>
    </interactant>
    <interactant intactId="EBI-7813714">
        <id>Q13563</id>
        <label>PKD2</label>
    </interactant>
    <organismsDiffer>false</organismsDiffer>
    <experiments>4</experiments>
</comment>
<comment type="interaction">
    <interactant intactId="EBI-15930070">
        <id>P98161-3</id>
    </interactant>
    <interactant intactId="EBI-9837017">
        <id>Q13563-1</id>
        <label>PKD2</label>
    </interactant>
    <organismsDiffer>false</organismsDiffer>
    <experiments>4</experiments>
</comment>
<comment type="subcellular location">
    <subcellularLocation>
        <location evidence="12 42 46 47 48">Cell membrane</location>
        <topology evidence="42 48">Multi-pass membrane protein</topology>
    </subcellularLocation>
    <subcellularLocation>
        <location evidence="2">Cell projection</location>
        <location evidence="2">Cilium</location>
    </subcellularLocation>
    <subcellularLocation>
        <location evidence="2">Endoplasmic reticulum</location>
    </subcellularLocation>
    <subcellularLocation>
        <location evidence="2">Golgi apparatus</location>
    </subcellularLocation>
    <subcellularLocation>
        <location evidence="49">Vesicle</location>
    </subcellularLocation>
    <subcellularLocation>
        <location evidence="49">Secreted</location>
        <location evidence="49">Extracellular exosome</location>
    </subcellularLocation>
    <text evidence="2 47 49">PKD1 localization to the plasma and ciliary membranes requires PKD2, is independent of PKD2 channel activity, and involves stimulation of PKD1 autoproteolytic cleavage at the GPS region of the GAIN-B domain. PKD1:PKD2 interaction is required to reach the Golgi apparatus from endoplasmic reticulum and then traffic to the cilia (By similarity). Ciliary localization of PKD1 requires BBS1 and ARL6/BBS3 (By similarity). Cell surface localization requires GANAB (PubMed:27259053). Detected on migrasomes and on extracellular exosomes in urine (PubMed:37681898).</text>
</comment>
<comment type="alternative products">
    <event type="alternative splicing"/>
    <isoform>
        <id>P98161-1</id>
        <name>1</name>
        <sequence type="displayed"/>
    </isoform>
    <isoform>
        <id>P98161-2</id>
        <name>2</name>
        <sequence type="described" ref="VSP_009677 VSP_009678"/>
    </isoform>
    <isoform>
        <id>P98161-3</id>
        <name>3</name>
        <sequence type="described" ref="VSP_009678"/>
    </isoform>
</comment>
<comment type="domain">
    <text>The LDL-receptor class A domain is atypical; the potential calcium-binding site is missing.</text>
</comment>
<comment type="PTM">
    <text evidence="49">N-glycosylated.</text>
</comment>
<comment type="PTM">
    <text evidence="34">After synthesis, undergoes cleavage between Leu-3048 and Thr-3049 in the GPS region of the GAIN-B domain. Cleavage at the GPS region occurs through a cis-autoproteolytic mechanism involving an ester-intermediate via N-O acyl rearrangement. This process takes place in the early secretory pathway, depends on initial N-glycosylation, and requires the REJ domain. There is evidence that cleavage at GPS region is incomplete. Uncleaved and cleaved products may have different functions in vivo.</text>
</comment>
<comment type="disease" evidence="11 13 14 15 16 17 18 19 20 21 22 23 24 25 26 27 28 29 30 31 32 33 34 35 36 39 43 44 52 54 55 56 57 58">
    <disease id="DI-00925">
        <name>Polycystic kidney disease 1 with or without polycystic liver disease</name>
        <acronym>PKD1</acronym>
        <description>An autosomal dominant disorder characterized by renal cysts, liver cysts and intracranial aneurysm. Clinical variability is due to differences in the rate of loss of glomerular filtration, the age of reaching end-stage renal disease and the occurrence of hypertension, symptomatic extrarenal cysts, and subarachnoid hemorrhage from intracranial 'berry' aneurysm.</description>
        <dbReference type="MIM" id="173900"/>
    </disease>
    <text>The disease is caused by variants affecting the gene represented in this entry.</text>
</comment>
<comment type="similarity">
    <text evidence="60">Belongs to the polycystin family.</text>
</comment>
<comment type="online information" name="Functional Glycomics Gateway - Glycan Binding">
    <link uri="http://www.functionalglycomics.org/glycomics/GBPServlet?&amp;operationType=view&amp;cbpId=cbp_hum_Ctlect_204"/>
    <text>Polycystin-1</text>
</comment>
<comment type="online information" name="Atlas of Genetics and Cytogenetics in Oncology and Haematology">
    <link uri="https://atlasgeneticsoncology.org/gene/41725/PKD1"/>
</comment>
<sequence length="4303" mass="462529">MPPAAPARLALALGLGLWLGALAGGPGRGCGPCEPPCLCGPAPGAACRVNCSGRGLRTLGPALRIPADATALDVSHNLLRALDVGLLANLSALAELDISNNKISTLEEGIFANLFNLSEINLSGNPFECDCGLAWLPRWAEEQQVRVVQPEAATCAGPGSLAGQPLLGIPLLDSGCGEEYVACLPDNSSGTVAAVSFSAAHEGLLQPEACSAFCFSTGQGLAALSEQGWCLCGAAQPSSASFACLSLCSGPPPPPAPTCRGPTLLQHVFPASPGATLVGPHGPLASGQLAAFHIAAPLPVTATRWDFGDGSAEVDAAGPAASHRYVLPGRYHVTAVLALGAGSALLGTDVQVEAAPAALELVCPSSVQSDESLDLSIQNRGGSGLEAAYSIVALGEEPARAVHPLCPSDTEIFPGNGHCYRLVVEKAAWLQAQEQCQAWAGAALAMVDSPAVQRFLVSRVTRSLDVWIGFSTVQGVEVGPAPQGEAFSLESCQNWLPGEPHPATAEHCVRLGPTGWCNTDLCSAPHSYVCELQPGGPVQDAENLLVGAPSGDLQGPLTPLAQQDGLSAPHEPVEVMVFPGLRLSREAFLTTAEFGTQELRRPAQLRLQVYRLLSTAGTPENGSEPESRSPDNRTQLAPACMPGGRWCPGANICLPLDASCHPQACANGCTSGPGLPGAPYALWREFLFSVPAGPPAQYSVTLHGQDVLMLPGDLVGLQHDAGPGALLHCSPAPGHPGPRAPYLSANASSWLPHLPAQLEGTWACPACALRLLAATEQLTVLLGLRPNPGLRLPGRYEVRAEVGNGVSRHNLSCSFDVVSPVAGLRVIYPAPRDGRLYVPTNGSALVLQVDSGANATATARWPGGSVSARFENVCPALVATFVPGCPWETNDTLFSVVALPWLSEGEHVVDVVVENSASRANLSLRVTAEEPICGLRATPSPEARVLQGVLVRYSPVVEAGSDMVFRWTINDKQSLTFQNVVFNVIYQSAAVFKLSLTASNHVSNVTVNYNVTVERMNRMQGLQVSTVPAVLSPNATLALTAGVLVDSAVEVAFLWTFGDGEQALHQFQPPYNESFPVPDPSVAQVLVEHNVMHTYAAPGEYLLTVLASNAFENLTQQVPVSVRASLPSVAVGVSDGVLVAGRPVTFYPHPLPSPGGVLYTWDFGDGSPVLTQSQPAANHTYASRGTYHVRLEVNNTVSGAAAQADVRVFEELRGLSVDMSLAVEQGAPVVVSAAVQTGDNITWTFDMGDGTVLSGPEATVEHVYLRAQNCTVTVGAASPAGHLARSLHVLVFVLEVLRVEPAACIPTQPDARLTAYVTGNPAHYLFDWTFGDGSSNTTVRGCPTVTHNFTRSGTFPLALVLSSRVNRAHYFTSICVEPEVGNVTLQPERQFVQLGDEAWLVACAWPPFPYRYTWDFGTEEAAPTRARGPEVTFIYRDPGSYLVTVTASNNISAANDSALVEVQEPVLVTSIKVNGSLGLELQQPYLFSAVGRGRPASYLWDLGDGGWLEGPEVTHAYNSTGDFTVRVAGWNEVSRSEAWLNVTVKRRVRGLVVNASRTVVPLNGSVSFSTSLEAGSDVRYSWVLCDRCTPIPGGPTISYTFRSVGTFNIIVTAENEVGSAQDSIFVYVLQLIEGLQVVGGGRYFPTNHTVQLQAVVRDGTNVSYSWTAWRDRGPALAGSGKGFSLTVLEAGTYHVQLRATNMLGSAWADCTMDFVEPVGWLMVAASPNPAAVNTSVTLSAELAGGSGVVYTWSLEEGLSWETSEPFTTHSFPTPGLHLVTMTAGNPLGSANATVEVDVQVPVSGLSIRASEPGGSFVAAGSSVPFWGQLATGTNVSWCWAVPGGSSKRGPHVTMVFPDAGTFSIRLNASNAVSWVSATYNLTAEEPIVGLVLWASSKVVAPGQLVHFQILLAAGSAVTFRLQVGGANPEVLPGPRFSHSFPRVGDHVVSVRGKNHVSWAQAQVRIVVLEAVSGLQVPNCCEPGIATGTERNFTARVQRGSRVAYAWYFSLQKVQGDSLVILSGRDVTYTPVAAGLLEIQVRAFNALGSENRTLVLEVQDAVQYVALQSGPCFTNRSAQFEAATSPSPRRVAYHWDFGDGSPGQDTDEPRAEHSYLRPGDYRVQVNASNLVSFFVAQATVTVQVLACREPEVDVVLPLQVLMRRSQRNYLEAHVDLRDCVTYQTEYRWEVYRTASCQRPGRPARVALPGVDVSRPRLVLPRLALPVGHYCFVFVVSFGDTPLTQSIQANVTVAPERLVPIIEGGSYRVWSDTRDLVLDGSESYDPNLEDGDQTPLSFHWACVASTQREAGGCALNFGPRGSSTVTIPRERLAAGVEYTFSLTVWKAGRKEEATNQTVLIRSGRVPIVSLECVSCKAQAVYEVSRSSYVYLEGRCLNCSSGSKRGRWAARTFSNKTLVLDETTTSTGSAGMRLVLRRGVLRDGEGYTFTLTVLGRSGEEEGCASIRLSPNRPPLGGSCRLFPLGAVHALTTKVHFECTGWHDAEDAGAPLVYALLLRRCRQGHCEEFCVYKGSLSSYGAVLPPGFRPHFEVGLAVVVQDQLGAAVVALNRSLAITLPEPNGSATGLTVWLHGLTASVLPGLLRQADPQHVIEYSLALVTVLNEYERALDVAAEPKHERQHRAQIRKNITETLVSLRVHTVDDIQQIAAALAQCMGPSRELVCRSCLKQTLHKLEAMMLILQAETTAGTVTPTAIGDSILNITGDLIHLASSDVRAPQPSELGAESPSRMVASQAYNLTSALMRILMRSRVLNEEPLTLAGEEIVAQGKRSDPRSLLCYGGAPGPGCHFSIPEAFSGALANLSDVVQLIFLVDSNPFPFGYISNYTVSTKVASMAFQTQAGAQIPIERLASERAITVKVPNNSDWAARGHRSSANSANSVVVQPQASVGAVVTLDSSNPAAGLHLQLNYTLLDGHYLSEEPEPYLAVYLHSEPRPNEHNCSASRRIRPESLQGADHRPYTFFISPGSRDPAGSYHLNLSSHFRWSALQVSVGLYTSLCQYFSEEDMVWRTEGLLPLEETSPRQAVCLTRHLTAFGASLFVPPSHVRFVFPEPTADVNYIVMLTCAVCLVTYMVMAAILHKLDQLDASRGRAIPFCGQRGRFKYEILVKTGWGRGSGTTAHVGIMLYGVDSRSGHRHLDGDRAFHRNSLDIFRIATPHSLGSVWKIRVWHDNKGLSPAWFLQHVIVRDLQTARSAFFLVNDWLSVETEANGGLVEKEVLAASDAALLRFRRLLVAELQRGFFDKHIWLSIWDRPPRSRFTRIQRATCCVLLICLFLGANAVWYGAVGDSAYSTGHVSRLSPLSVDTVAVGLVSSVVVYPVYLAILFLFRMSRSKVAGSPSPTPAGQQVLDIDSCLDSSVLDSSFLTFSGLHAEQAFVGQMKSDLFLDDSKSLVCWPSGEGTLSWPDLLSDPSIVGSNLRQLARGQAGHGLGPEEDGFSLASPYSPAKSFSASDEDLIQQVLAEGVSSPAPTQDTHMETDLLSSLSSTPGEKTETLALQRLGELGPPSPGLNWEQPQAARLSRTGLVEGLRKRLLPAWCASLAHGLSLLLVAVAVAVSGWVGASFPPGVSVAWLLSSSASFLASFLGWEPLKVLLEALYFSLVAKRLHPDEDDTLVESPAVTPVSARVPRVRPPHGFALFLAKEEARKVKRLHGMLRSLLVYMLFLLVTLLASYGDASCHGHAYRLQSAIKQELHSRAFLAITRSEELWPWMAHVLLPYVHGNQSSPELGPPRLRQVRLQEALYPDPPGPRVHTCSAAGGFSTSDYDVGWESPHNGSGTWAYSAPDLLGAWSWGSCAVYDSGGYVQELGLSLEESRDRLRFLQLHNWLDNRSRAVFLELTRYSPAVGLHAAVTLRLEFPAAGRALAALSVRPFALRRLSAGLSLPLLTSVCLLLFAVHFAVAEARTWHREGRWRVLRLGAWARWLLVALTAATALVRLAQLGAADRQWTRFVRGRPRRFTSFDQVAQLSSAARGLAASLLFLLLVKAAQQLRFVRQWSVFGKTLCRALPELLGVTLGLVVLGVAYAQLAILLVSSCVDSLWSVAQALLVLCPGTGLSTLCPAESWHLSPLLCVGLWALRLWGALRLGAVILRWRYHALRGELYRPAWEPQDYEMVELFLRRLRLWMGLSKVKEFRHKVRFEGMEPLPSRSSRGSKVSPDVPPPSAGSDASHPSTSSSQLDGLSVSLGRLGTRCEPEPSRLQAVFEALLTQFDRLNQATEDVYQLEQQLHSLQGRRSSRAPAGSSRGPSPGLRPALPSRLARASRGVDLATGPSRTPLRAKNKVHPSST</sequence>